<keyword id="KW-0002">3D-structure</keyword>
<keyword id="KW-0025">Alternative splicing</keyword>
<keyword id="KW-0221">Differentiation</keyword>
<keyword id="KW-0903">Direct protein sequencing</keyword>
<keyword id="KW-0256">Endoplasmic reticulum</keyword>
<keyword id="KW-0333">Golgi apparatus</keyword>
<keyword id="KW-0449">Lipoprotein</keyword>
<keyword id="KW-0472">Membrane</keyword>
<keyword id="KW-0488">Methylation</keyword>
<keyword id="KW-0519">Myristate</keyword>
<keyword id="KW-0564">Palmitate</keyword>
<keyword id="KW-0597">Phosphoprotein</keyword>
<keyword id="KW-1267">Proteomics identification</keyword>
<keyword id="KW-1185">Reference proteome</keyword>
<keyword id="KW-0677">Repeat</keyword>
<keyword id="KW-0744">Spermatogenesis</keyword>
<name>GORS2_HUMAN</name>
<organism>
    <name type="scientific">Homo sapiens</name>
    <name type="common">Human</name>
    <dbReference type="NCBI Taxonomy" id="9606"/>
    <lineage>
        <taxon>Eukaryota</taxon>
        <taxon>Metazoa</taxon>
        <taxon>Chordata</taxon>
        <taxon>Craniata</taxon>
        <taxon>Vertebrata</taxon>
        <taxon>Euteleostomi</taxon>
        <taxon>Mammalia</taxon>
        <taxon>Eutheria</taxon>
        <taxon>Euarchontoglires</taxon>
        <taxon>Primates</taxon>
        <taxon>Haplorrhini</taxon>
        <taxon>Catarrhini</taxon>
        <taxon>Hominidae</taxon>
        <taxon>Homo</taxon>
    </lineage>
</organism>
<gene>
    <name type="primary">GORASP2</name>
    <name type="synonym">GOLPH6</name>
</gene>
<reference key="1">
    <citation type="journal article" date="2000" name="EMBO J.">
        <title>Transmembrane transforming growth factor-alpha tethers to the PDZ domain-containing, Golgi membrane-associated protein p59/GRASP55.</title>
        <authorList>
            <person name="Kuo A."/>
            <person name="Zhong C."/>
            <person name="Lane W.S."/>
            <person name="Derynck R."/>
        </authorList>
    </citation>
    <scope>NUCLEOTIDE SEQUENCE [MRNA] (ISOFORM 1)</scope>
    <scope>PROTEIN SEQUENCE OF 82-97; 134-141; 164-175 AND 203-229</scope>
    <scope>FUNCTION</scope>
    <scope>SUBCELLULAR LOCATION</scope>
    <scope>MYRISTOYLATION AT GLY-2</scope>
    <scope>PALMITOYLATION</scope>
    <scope>INTERACTION WITH TGFA</scope>
</reference>
<reference key="2">
    <citation type="journal article" date="2001" name="Mol. Biol. Cell">
        <title>Mitotic phosphorylation of Golgi reassembly stacking protein 55 by mitogen-activated protein kinase ERK2.</title>
        <authorList>
            <person name="Jesch S.A."/>
            <person name="Lewis T.S."/>
            <person name="Ahn N.G."/>
            <person name="Linstedt A.D."/>
        </authorList>
    </citation>
    <scope>NUCLEOTIDE SEQUENCE [MRNA] (ISOFORM 1)</scope>
    <scope>PHOSPHORYLATION AT THR-225</scope>
    <scope>MUTAGENESIS OF THR-222 AND THR-225</scope>
</reference>
<reference key="3">
    <citation type="journal article" date="2004" name="Nat. Genet.">
        <title>Complete sequencing and characterization of 21,243 full-length human cDNAs.</title>
        <authorList>
            <person name="Ota T."/>
            <person name="Suzuki Y."/>
            <person name="Nishikawa T."/>
            <person name="Otsuki T."/>
            <person name="Sugiyama T."/>
            <person name="Irie R."/>
            <person name="Wakamatsu A."/>
            <person name="Hayashi K."/>
            <person name="Sato H."/>
            <person name="Nagai K."/>
            <person name="Kimura K."/>
            <person name="Makita H."/>
            <person name="Sekine M."/>
            <person name="Obayashi M."/>
            <person name="Nishi T."/>
            <person name="Shibahara T."/>
            <person name="Tanaka T."/>
            <person name="Ishii S."/>
            <person name="Yamamoto J."/>
            <person name="Saito K."/>
            <person name="Kawai Y."/>
            <person name="Isono Y."/>
            <person name="Nakamura Y."/>
            <person name="Nagahari K."/>
            <person name="Murakami K."/>
            <person name="Yasuda T."/>
            <person name="Iwayanagi T."/>
            <person name="Wagatsuma M."/>
            <person name="Shiratori A."/>
            <person name="Sudo H."/>
            <person name="Hosoiri T."/>
            <person name="Kaku Y."/>
            <person name="Kodaira H."/>
            <person name="Kondo H."/>
            <person name="Sugawara M."/>
            <person name="Takahashi M."/>
            <person name="Kanda K."/>
            <person name="Yokoi T."/>
            <person name="Furuya T."/>
            <person name="Kikkawa E."/>
            <person name="Omura Y."/>
            <person name="Abe K."/>
            <person name="Kamihara K."/>
            <person name="Katsuta N."/>
            <person name="Sato K."/>
            <person name="Tanikawa M."/>
            <person name="Yamazaki M."/>
            <person name="Ninomiya K."/>
            <person name="Ishibashi T."/>
            <person name="Yamashita H."/>
            <person name="Murakawa K."/>
            <person name="Fujimori K."/>
            <person name="Tanai H."/>
            <person name="Kimata M."/>
            <person name="Watanabe M."/>
            <person name="Hiraoka S."/>
            <person name="Chiba Y."/>
            <person name="Ishida S."/>
            <person name="Ono Y."/>
            <person name="Takiguchi S."/>
            <person name="Watanabe S."/>
            <person name="Yosida M."/>
            <person name="Hotuta T."/>
            <person name="Kusano J."/>
            <person name="Kanehori K."/>
            <person name="Takahashi-Fujii A."/>
            <person name="Hara H."/>
            <person name="Tanase T.-O."/>
            <person name="Nomura Y."/>
            <person name="Togiya S."/>
            <person name="Komai F."/>
            <person name="Hara R."/>
            <person name="Takeuchi K."/>
            <person name="Arita M."/>
            <person name="Imose N."/>
            <person name="Musashino K."/>
            <person name="Yuuki H."/>
            <person name="Oshima A."/>
            <person name="Sasaki N."/>
            <person name="Aotsuka S."/>
            <person name="Yoshikawa Y."/>
            <person name="Matsunawa H."/>
            <person name="Ichihara T."/>
            <person name="Shiohata N."/>
            <person name="Sano S."/>
            <person name="Moriya S."/>
            <person name="Momiyama H."/>
            <person name="Satoh N."/>
            <person name="Takami S."/>
            <person name="Terashima Y."/>
            <person name="Suzuki O."/>
            <person name="Nakagawa S."/>
            <person name="Senoh A."/>
            <person name="Mizoguchi H."/>
            <person name="Goto Y."/>
            <person name="Shimizu F."/>
            <person name="Wakebe H."/>
            <person name="Hishigaki H."/>
            <person name="Watanabe T."/>
            <person name="Sugiyama A."/>
            <person name="Takemoto M."/>
            <person name="Kawakami B."/>
            <person name="Yamazaki M."/>
            <person name="Watanabe K."/>
            <person name="Kumagai A."/>
            <person name="Itakura S."/>
            <person name="Fukuzumi Y."/>
            <person name="Fujimori Y."/>
            <person name="Komiyama M."/>
            <person name="Tashiro H."/>
            <person name="Tanigami A."/>
            <person name="Fujiwara T."/>
            <person name="Ono T."/>
            <person name="Yamada K."/>
            <person name="Fujii Y."/>
            <person name="Ozaki K."/>
            <person name="Hirao M."/>
            <person name="Ohmori Y."/>
            <person name="Kawabata A."/>
            <person name="Hikiji T."/>
            <person name="Kobatake N."/>
            <person name="Inagaki H."/>
            <person name="Ikema Y."/>
            <person name="Okamoto S."/>
            <person name="Okitani R."/>
            <person name="Kawakami T."/>
            <person name="Noguchi S."/>
            <person name="Itoh T."/>
            <person name="Shigeta K."/>
            <person name="Senba T."/>
            <person name="Matsumura K."/>
            <person name="Nakajima Y."/>
            <person name="Mizuno T."/>
            <person name="Morinaga M."/>
            <person name="Sasaki M."/>
            <person name="Togashi T."/>
            <person name="Oyama M."/>
            <person name="Hata H."/>
            <person name="Watanabe M."/>
            <person name="Komatsu T."/>
            <person name="Mizushima-Sugano J."/>
            <person name="Satoh T."/>
            <person name="Shirai Y."/>
            <person name="Takahashi Y."/>
            <person name="Nakagawa K."/>
            <person name="Okumura K."/>
            <person name="Nagase T."/>
            <person name="Nomura N."/>
            <person name="Kikuchi H."/>
            <person name="Masuho Y."/>
            <person name="Yamashita R."/>
            <person name="Nakai K."/>
            <person name="Yada T."/>
            <person name="Nakamura Y."/>
            <person name="Ohara O."/>
            <person name="Isogai T."/>
            <person name="Sugano S."/>
        </authorList>
    </citation>
    <scope>NUCLEOTIDE SEQUENCE [LARGE SCALE MRNA] (ISOFORMS 1 AND 3)</scope>
    <scope>VARIANT PHE-432</scope>
    <source>
        <tissue>Tongue</tissue>
    </source>
</reference>
<reference key="4">
    <citation type="journal article" date="2007" name="BMC Genomics">
        <title>The full-ORF clone resource of the German cDNA consortium.</title>
        <authorList>
            <person name="Bechtel S."/>
            <person name="Rosenfelder H."/>
            <person name="Duda A."/>
            <person name="Schmidt C.P."/>
            <person name="Ernst U."/>
            <person name="Wellenreuther R."/>
            <person name="Mehrle A."/>
            <person name="Schuster C."/>
            <person name="Bahr A."/>
            <person name="Bloecker H."/>
            <person name="Heubner D."/>
            <person name="Hoerlein A."/>
            <person name="Michel G."/>
            <person name="Wedler H."/>
            <person name="Koehrer K."/>
            <person name="Ottenwaelder B."/>
            <person name="Poustka A."/>
            <person name="Wiemann S."/>
            <person name="Schupp I."/>
        </authorList>
    </citation>
    <scope>NUCLEOTIDE SEQUENCE [LARGE SCALE MRNA] (ISOFORM 2)</scope>
    <source>
        <tissue>Testis</tissue>
    </source>
</reference>
<reference key="5">
    <citation type="journal article" date="2005" name="Nature">
        <title>Generation and annotation of the DNA sequences of human chromosomes 2 and 4.</title>
        <authorList>
            <person name="Hillier L.W."/>
            <person name="Graves T.A."/>
            <person name="Fulton R.S."/>
            <person name="Fulton L.A."/>
            <person name="Pepin K.H."/>
            <person name="Minx P."/>
            <person name="Wagner-McPherson C."/>
            <person name="Layman D."/>
            <person name="Wylie K."/>
            <person name="Sekhon M."/>
            <person name="Becker M.C."/>
            <person name="Fewell G.A."/>
            <person name="Delehaunty K.D."/>
            <person name="Miner T.L."/>
            <person name="Nash W.E."/>
            <person name="Kremitzki C."/>
            <person name="Oddy L."/>
            <person name="Du H."/>
            <person name="Sun H."/>
            <person name="Bradshaw-Cordum H."/>
            <person name="Ali J."/>
            <person name="Carter J."/>
            <person name="Cordes M."/>
            <person name="Harris A."/>
            <person name="Isak A."/>
            <person name="van Brunt A."/>
            <person name="Nguyen C."/>
            <person name="Du F."/>
            <person name="Courtney L."/>
            <person name="Kalicki J."/>
            <person name="Ozersky P."/>
            <person name="Abbott S."/>
            <person name="Armstrong J."/>
            <person name="Belter E.A."/>
            <person name="Caruso L."/>
            <person name="Cedroni M."/>
            <person name="Cotton M."/>
            <person name="Davidson T."/>
            <person name="Desai A."/>
            <person name="Elliott G."/>
            <person name="Erb T."/>
            <person name="Fronick C."/>
            <person name="Gaige T."/>
            <person name="Haakenson W."/>
            <person name="Haglund K."/>
            <person name="Holmes A."/>
            <person name="Harkins R."/>
            <person name="Kim K."/>
            <person name="Kruchowski S.S."/>
            <person name="Strong C.M."/>
            <person name="Grewal N."/>
            <person name="Goyea E."/>
            <person name="Hou S."/>
            <person name="Levy A."/>
            <person name="Martinka S."/>
            <person name="Mead K."/>
            <person name="McLellan M.D."/>
            <person name="Meyer R."/>
            <person name="Randall-Maher J."/>
            <person name="Tomlinson C."/>
            <person name="Dauphin-Kohlberg S."/>
            <person name="Kozlowicz-Reilly A."/>
            <person name="Shah N."/>
            <person name="Swearengen-Shahid S."/>
            <person name="Snider J."/>
            <person name="Strong J.T."/>
            <person name="Thompson J."/>
            <person name="Yoakum M."/>
            <person name="Leonard S."/>
            <person name="Pearman C."/>
            <person name="Trani L."/>
            <person name="Radionenko M."/>
            <person name="Waligorski J.E."/>
            <person name="Wang C."/>
            <person name="Rock S.M."/>
            <person name="Tin-Wollam A.-M."/>
            <person name="Maupin R."/>
            <person name="Latreille P."/>
            <person name="Wendl M.C."/>
            <person name="Yang S.-P."/>
            <person name="Pohl C."/>
            <person name="Wallis J.W."/>
            <person name="Spieth J."/>
            <person name="Bieri T.A."/>
            <person name="Berkowicz N."/>
            <person name="Nelson J.O."/>
            <person name="Osborne J."/>
            <person name="Ding L."/>
            <person name="Meyer R."/>
            <person name="Sabo A."/>
            <person name="Shotland Y."/>
            <person name="Sinha P."/>
            <person name="Wohldmann P.E."/>
            <person name="Cook L.L."/>
            <person name="Hickenbotham M.T."/>
            <person name="Eldred J."/>
            <person name="Williams D."/>
            <person name="Jones T.A."/>
            <person name="She X."/>
            <person name="Ciccarelli F.D."/>
            <person name="Izaurralde E."/>
            <person name="Taylor J."/>
            <person name="Schmutz J."/>
            <person name="Myers R.M."/>
            <person name="Cox D.R."/>
            <person name="Huang X."/>
            <person name="McPherson J.D."/>
            <person name="Mardis E.R."/>
            <person name="Clifton S.W."/>
            <person name="Warren W.C."/>
            <person name="Chinwalla A.T."/>
            <person name="Eddy S.R."/>
            <person name="Marra M.A."/>
            <person name="Ovcharenko I."/>
            <person name="Furey T.S."/>
            <person name="Miller W."/>
            <person name="Eichler E.E."/>
            <person name="Bork P."/>
            <person name="Suyama M."/>
            <person name="Torrents D."/>
            <person name="Waterston R.H."/>
            <person name="Wilson R.K."/>
        </authorList>
    </citation>
    <scope>NUCLEOTIDE SEQUENCE [LARGE SCALE GENOMIC DNA]</scope>
</reference>
<reference key="6">
    <citation type="submission" date="2005-09" db="EMBL/GenBank/DDBJ databases">
        <authorList>
            <person name="Mural R.J."/>
            <person name="Istrail S."/>
            <person name="Sutton G.G."/>
            <person name="Florea L."/>
            <person name="Halpern A.L."/>
            <person name="Mobarry C.M."/>
            <person name="Lippert R."/>
            <person name="Walenz B."/>
            <person name="Shatkay H."/>
            <person name="Dew I."/>
            <person name="Miller J.R."/>
            <person name="Flanigan M.J."/>
            <person name="Edwards N.J."/>
            <person name="Bolanos R."/>
            <person name="Fasulo D."/>
            <person name="Halldorsson B.V."/>
            <person name="Hannenhalli S."/>
            <person name="Turner R."/>
            <person name="Yooseph S."/>
            <person name="Lu F."/>
            <person name="Nusskern D.R."/>
            <person name="Shue B.C."/>
            <person name="Zheng X.H."/>
            <person name="Zhong F."/>
            <person name="Delcher A.L."/>
            <person name="Huson D.H."/>
            <person name="Kravitz S.A."/>
            <person name="Mouchard L."/>
            <person name="Reinert K."/>
            <person name="Remington K.A."/>
            <person name="Clark A.G."/>
            <person name="Waterman M.S."/>
            <person name="Eichler E.E."/>
            <person name="Adams M.D."/>
            <person name="Hunkapiller M.W."/>
            <person name="Myers E.W."/>
            <person name="Venter J.C."/>
        </authorList>
    </citation>
    <scope>NUCLEOTIDE SEQUENCE [LARGE SCALE GENOMIC DNA]</scope>
</reference>
<reference key="7">
    <citation type="journal article" date="2004" name="Genome Res.">
        <title>The status, quality, and expansion of the NIH full-length cDNA project: the Mammalian Gene Collection (MGC).</title>
        <authorList>
            <consortium name="The MGC Project Team"/>
        </authorList>
    </citation>
    <scope>NUCLEOTIDE SEQUENCE [LARGE SCALE MRNA] (ISOFORM 1)</scope>
    <source>
        <tissue>Uterus</tissue>
    </source>
</reference>
<reference key="8">
    <citation type="journal article" date="1999" name="EMBO J.">
        <title>GRASP55, a second mammalian GRASP protein involved in the stacking of Golgi cisternae in a cell-free system.</title>
        <authorList>
            <person name="Shorter J."/>
            <person name="Watson R."/>
            <person name="Giannakou M.-E."/>
            <person name="Clarke M."/>
            <person name="Warren G."/>
            <person name="Barr F.A."/>
        </authorList>
    </citation>
    <scope>FUNCTION</scope>
    <scope>SUBCELLULAR LOCATION</scope>
</reference>
<reference key="9">
    <citation type="journal article" date="2001" name="J. Cell Biol.">
        <title>A GRASP55-rab2 effector complex linking Golgi structure to membrane traffic.</title>
        <authorList>
            <person name="Short B."/>
            <person name="Preisinger C."/>
            <person name="Koerner R."/>
            <person name="Kopajtich R."/>
            <person name="Byron O."/>
            <person name="Barr F.A."/>
        </authorList>
    </citation>
    <scope>INTERACTION WITH BLZF1/GOLGIN 45</scope>
</reference>
<reference key="10">
    <citation type="journal article" date="2001" name="J. Cell Biol.">
        <title>Golgi matrix proteins interact with p24 cargo receptors and aid their efficient retention in the Golgi apparatus.</title>
        <authorList>
            <person name="Barr F.A."/>
            <person name="Preisinger C."/>
            <person name="Kopajtich R."/>
            <person name="Koerner R."/>
        </authorList>
    </citation>
    <scope>INTERACTION WITH PROTEINS OF THE P24 CARGO FAMILY</scope>
</reference>
<reference key="11">
    <citation type="journal article" date="2006" name="Cell">
        <title>Global, in vivo, and site-specific phosphorylation dynamics in signaling networks.</title>
        <authorList>
            <person name="Olsen J.V."/>
            <person name="Blagoev B."/>
            <person name="Gnad F."/>
            <person name="Macek B."/>
            <person name="Kumar C."/>
            <person name="Mortensen P."/>
            <person name="Mann M."/>
        </authorList>
    </citation>
    <scope>PHOSPHORYLATION [LARGE SCALE ANALYSIS] AT THR-222; THR-225 AND THR-415</scope>
    <scope>IDENTIFICATION BY MASS SPECTROMETRY [LARGE SCALE ANALYSIS]</scope>
    <source>
        <tissue>Cervix carcinoma</tissue>
    </source>
</reference>
<reference key="12">
    <citation type="journal article" date="2006" name="Nat. Biotechnol.">
        <title>A probability-based approach for high-throughput protein phosphorylation analysis and site localization.</title>
        <authorList>
            <person name="Beausoleil S.A."/>
            <person name="Villen J."/>
            <person name="Gerber S.A."/>
            <person name="Rush J."/>
            <person name="Gygi S.P."/>
        </authorList>
    </citation>
    <scope>PHOSPHORYLATION [LARGE SCALE ANALYSIS] AT THR-415</scope>
    <scope>IDENTIFICATION BY MASS SPECTROMETRY [LARGE SCALE ANALYSIS]</scope>
    <source>
        <tissue>Cervix carcinoma</tissue>
    </source>
</reference>
<reference key="13">
    <citation type="journal article" date="2007" name="J. Cell Sci.">
        <title>Cornichon regulates transport and secretion of TGFalpha-related proteins in metazoan cells.</title>
        <authorList>
            <person name="Perez Castro C."/>
            <person name="Piscopo D."/>
            <person name="Nakagawa T."/>
            <person name="Derynck R."/>
        </authorList>
    </citation>
    <scope>INTERACTION WITH CNIH1 AND TGFA</scope>
</reference>
<reference key="14">
    <citation type="journal article" date="2008" name="Proc. Natl. Acad. Sci. U.S.A.">
        <title>A quantitative atlas of mitotic phosphorylation.</title>
        <authorList>
            <person name="Dephoure N."/>
            <person name="Zhou C."/>
            <person name="Villen J."/>
            <person name="Beausoleil S.A."/>
            <person name="Bakalarski C.E."/>
            <person name="Elledge S.J."/>
            <person name="Gygi S.P."/>
        </authorList>
    </citation>
    <scope>PHOSPHORYLATION [LARGE SCALE ANALYSIS] AT THR-415; THR-433; SER-436; SER-449 AND SER-451</scope>
    <scope>IDENTIFICATION BY MASS SPECTROMETRY [LARGE SCALE ANALYSIS]</scope>
    <source>
        <tissue>Cervix carcinoma</tissue>
    </source>
</reference>
<reference key="15">
    <citation type="journal article" date="2009" name="Anal. Chem.">
        <title>Lys-N and trypsin cover complementary parts of the phosphoproteome in a refined SCX-based approach.</title>
        <authorList>
            <person name="Gauci S."/>
            <person name="Helbig A.O."/>
            <person name="Slijper M."/>
            <person name="Krijgsveld J."/>
            <person name="Heck A.J."/>
            <person name="Mohammed S."/>
        </authorList>
    </citation>
    <scope>IDENTIFICATION BY MASS SPECTROMETRY [LARGE SCALE ANALYSIS]</scope>
</reference>
<reference key="16">
    <citation type="journal article" date="2009" name="J. Mol. Biol.">
        <title>Pentameric assembly of potassium channel tetramerization domain-containing protein 5.</title>
        <authorList>
            <person name="Dementieva I.S."/>
            <person name="Tereshko V."/>
            <person name="McCrossan Z.A."/>
            <person name="Solomaha E."/>
            <person name="Araki D."/>
            <person name="Xu C."/>
            <person name="Grigorieff N."/>
            <person name="Goldstein S.A."/>
        </authorList>
    </citation>
    <scope>INTERACTION WITH KCTD5</scope>
</reference>
<reference key="17">
    <citation type="journal article" date="2009" name="Sci. Signal.">
        <title>Quantitative phosphoproteomic analysis of T cell receptor signaling reveals system-wide modulation of protein-protein interactions.</title>
        <authorList>
            <person name="Mayya V."/>
            <person name="Lundgren D.H."/>
            <person name="Hwang S.-I."/>
            <person name="Rezaul K."/>
            <person name="Wu L."/>
            <person name="Eng J.K."/>
            <person name="Rodionov V."/>
            <person name="Han D.K."/>
        </authorList>
    </citation>
    <scope>PHOSPHORYLATION [LARGE SCALE ANALYSIS] AT SER-451</scope>
    <scope>IDENTIFICATION BY MASS SPECTROMETRY [LARGE SCALE ANALYSIS]</scope>
    <source>
        <tissue>Leukemic T-cell</tissue>
    </source>
</reference>
<reference key="18">
    <citation type="journal article" date="2010" name="Sci. Signal.">
        <title>Quantitative phosphoproteomics reveals widespread full phosphorylation site occupancy during mitosis.</title>
        <authorList>
            <person name="Olsen J.V."/>
            <person name="Vermeulen M."/>
            <person name="Santamaria A."/>
            <person name="Kumar C."/>
            <person name="Miller M.L."/>
            <person name="Jensen L.J."/>
            <person name="Gnad F."/>
            <person name="Cox J."/>
            <person name="Jensen T.S."/>
            <person name="Nigg E.A."/>
            <person name="Brunak S."/>
            <person name="Mann M."/>
        </authorList>
    </citation>
    <scope>PHOSPHORYLATION [LARGE SCALE ANALYSIS] AT SER-214; THR-222; THR-225 AND THR-415</scope>
    <scope>IDENTIFICATION BY MASS SPECTROMETRY [LARGE SCALE ANALYSIS]</scope>
    <source>
        <tissue>Cervix carcinoma</tissue>
    </source>
</reference>
<reference key="19">
    <citation type="journal article" date="2011" name="BMC Syst. Biol.">
        <title>Initial characterization of the human central proteome.</title>
        <authorList>
            <person name="Burkard T.R."/>
            <person name="Planyavsky M."/>
            <person name="Kaupe I."/>
            <person name="Breitwieser F.P."/>
            <person name="Buerckstuemmer T."/>
            <person name="Bennett K.L."/>
            <person name="Superti-Furga G."/>
            <person name="Colinge J."/>
        </authorList>
    </citation>
    <scope>IDENTIFICATION BY MASS SPECTROMETRY [LARGE SCALE ANALYSIS]</scope>
</reference>
<reference key="20">
    <citation type="journal article" date="2011" name="Cell">
        <title>Rescue of DeltaF508-CFTR trafficking via a GRASP-dependent unconventional secretion pathway.</title>
        <authorList>
            <person name="Gee H.Y."/>
            <person name="Noh S.H."/>
            <person name="Tang B.L."/>
            <person name="Kim K.H."/>
            <person name="Lee M.G."/>
        </authorList>
    </citation>
    <scope>FUNCTION</scope>
    <scope>INTERACTION WITH CFTR</scope>
    <scope>MUTAGENESIS OF GLY-2 AND SER-441</scope>
    <scope>PHOSPHORYLATION AT SER-441</scope>
</reference>
<reference key="21">
    <citation type="journal article" date="2011" name="Sci. Signal.">
        <title>System-wide temporal characterization of the proteome and phosphoproteome of human embryonic stem cell differentiation.</title>
        <authorList>
            <person name="Rigbolt K.T."/>
            <person name="Prokhorova T.A."/>
            <person name="Akimov V."/>
            <person name="Henningsen J."/>
            <person name="Johansen P.T."/>
            <person name="Kratchmarova I."/>
            <person name="Kassem M."/>
            <person name="Mann M."/>
            <person name="Olsen J.V."/>
            <person name="Blagoev B."/>
        </authorList>
    </citation>
    <scope>IDENTIFICATION BY MASS SPECTROMETRY [LARGE SCALE ANALYSIS]</scope>
</reference>
<reference key="22">
    <citation type="journal article" date="2013" name="J. Proteome Res.">
        <title>Toward a comprehensive characterization of a human cancer cell phosphoproteome.</title>
        <authorList>
            <person name="Zhou H."/>
            <person name="Di Palma S."/>
            <person name="Preisinger C."/>
            <person name="Peng M."/>
            <person name="Polat A.N."/>
            <person name="Heck A.J."/>
            <person name="Mohammed S."/>
        </authorList>
    </citation>
    <scope>PHOSPHORYLATION [LARGE SCALE ANALYSIS] AT THR-222; THR-225 AND SER-451</scope>
    <scope>IDENTIFICATION BY MASS SPECTROMETRY [LARGE SCALE ANALYSIS]</scope>
    <source>
        <tissue>Cervix carcinoma</tissue>
        <tissue>Erythroleukemia</tissue>
    </source>
</reference>
<reference key="23">
    <citation type="journal article" date="2014" name="J. Proteomics">
        <title>An enzyme assisted RP-RPLC approach for in-depth analysis of human liver phosphoproteome.</title>
        <authorList>
            <person name="Bian Y."/>
            <person name="Song C."/>
            <person name="Cheng K."/>
            <person name="Dong M."/>
            <person name="Wang F."/>
            <person name="Huang J."/>
            <person name="Sun D."/>
            <person name="Wang L."/>
            <person name="Ye M."/>
            <person name="Zou H."/>
        </authorList>
    </citation>
    <scope>PHOSPHORYLATION [LARGE SCALE ANALYSIS] AT SER-214; THR-222 AND THR-225</scope>
    <scope>IDENTIFICATION BY MASS SPECTROMETRY [LARGE SCALE ANALYSIS]</scope>
    <source>
        <tissue>Liver</tissue>
    </source>
</reference>
<reference key="24">
    <citation type="journal article" date="2014" name="Nat. Commun.">
        <title>Global profiling of co- and post-translationally N-myristoylated proteomes in human cells.</title>
        <authorList>
            <person name="Thinon E."/>
            <person name="Serwa R.A."/>
            <person name="Broncel M."/>
            <person name="Brannigan J.A."/>
            <person name="Brassat U."/>
            <person name="Wright M.H."/>
            <person name="Heal W.P."/>
            <person name="Wilkinson A.J."/>
            <person name="Mann D.J."/>
            <person name="Tate E.W."/>
        </authorList>
    </citation>
    <scope>MYRISTOYLATION AT GLY-2</scope>
    <scope>CLEAVAGE OF INITIATOR METHIONINE</scope>
    <scope>IDENTIFICATION BY MASS SPECTROMETRY</scope>
</reference>
<reference key="25">
    <citation type="journal article" date="2015" name="Angew. Chem. Int. Ed.">
        <title>Multifunctional reagents for quantitative proteome-wide analysis of protein modification in human cells and dynamic profiling of protein lipidation during vertebrate development.</title>
        <authorList>
            <person name="Broncel M."/>
            <person name="Serwa R.A."/>
            <person name="Ciepla P."/>
            <person name="Krause E."/>
            <person name="Dallman M.J."/>
            <person name="Magee A.I."/>
            <person name="Tate E.W."/>
        </authorList>
    </citation>
    <scope>MYRISTOYLATION AT GLY-2</scope>
    <scope>CLEAVAGE OF INITIATOR METHIONINE</scope>
    <scope>IDENTIFICATION BY MASS SPECTROMETRY</scope>
</reference>
<reference key="26">
    <citation type="journal article" date="2015" name="Proteomics">
        <title>N-terminome analysis of the human mitochondrial proteome.</title>
        <authorList>
            <person name="Vaca Jacome A.S."/>
            <person name="Rabilloud T."/>
            <person name="Schaeffer-Reiss C."/>
            <person name="Rompais M."/>
            <person name="Ayoub D."/>
            <person name="Lane L."/>
            <person name="Bairoch A."/>
            <person name="Van Dorsselaer A."/>
            <person name="Carapito C."/>
        </authorList>
    </citation>
    <scope>IDENTIFICATION BY MASS SPECTROMETRY [LARGE SCALE ANALYSIS]</scope>
</reference>
<reference key="27">
    <citation type="journal article" date="2016" name="Traffic">
        <title>Monomerization and ER relocalization of GRASP Is a requisite for unconventional secretion of CFTR.</title>
        <authorList>
            <person name="Kim J."/>
            <person name="Noh S.H."/>
            <person name="Piao H."/>
            <person name="Kim D.H."/>
            <person name="Kim K."/>
            <person name="Cha J.S."/>
            <person name="Chung W.Y."/>
            <person name="Cho H.S."/>
            <person name="Kim J.Y."/>
            <person name="Lee M.G."/>
        </authorList>
    </citation>
    <scope>FUNCTION</scope>
    <scope>SUBCELLULAR LOCATION</scope>
    <scope>SUBUNIT</scope>
    <scope>MYRISTOYLATION AT GLY-2</scope>
    <scope>MUTAGENESIS OF GLY-2; ASP-148; SER-441; SER-449 AND SER-451</scope>
    <scope>PHOSPHORYLATION AT SER-441; SER-449 AND SER-451</scope>
</reference>
<reference key="28">
    <citation type="journal article" date="2017" name="Sci. Rep.">
        <title>Sec16A is critical for both conventional and unconventional secretion of CFTR.</title>
        <authorList>
            <person name="Piao H."/>
            <person name="Kim J."/>
            <person name="Noh S.H."/>
            <person name="Kweon H.S."/>
            <person name="Kim J.Y."/>
            <person name="Lee M.G."/>
        </authorList>
    </citation>
    <scope>FUNCTION</scope>
    <scope>INTERACTION WITH SEC16A</scope>
    <scope>SUBCELLULAR LOCATION</scope>
</reference>
<reference key="29">
    <citation type="journal article" date="2021" name="J. Cell Biol.">
        <title>Rapid degradation of GRASP55 and GRASP65 reveals their immediate impact on the Golgi structure.</title>
        <authorList>
            <person name="Zhang Y."/>
            <person name="Seemann J."/>
        </authorList>
    </citation>
    <scope>FUNCTION</scope>
</reference>
<reference key="30">
    <citation type="journal article" date="2011" name="J. Biol. Chem.">
        <title>Structure of the membrane-tethering GRASP domain reveals a unique PDZ ligand interaction that mediates Golgi biogenesis.</title>
        <authorList>
            <person name="Truschel S.T."/>
            <person name="Sengupta D."/>
            <person name="Foote A."/>
            <person name="Heroux A."/>
            <person name="Macbeth M.R."/>
            <person name="Linstedt A.D."/>
        </authorList>
    </citation>
    <scope>X-RAY CRYSTALLOGRAPHY (1.65 ANGSTROMS) OF 2-208</scope>
    <scope>FUNCTION</scope>
    <scope>SUBCELLULAR LOCATION</scope>
    <scope>MUTAGENESIS OF LEU-59 AND ILE-100</scope>
</reference>
<reference evidence="25" key="31">
    <citation type="journal article" date="2012" name="J. Biol. Chem.">
        <title>Allosteric regulation of GRASP protein-dependent Golgi membrane tethering by mitotic phosphorylation.</title>
        <authorList>
            <person name="Truschel S.T."/>
            <person name="Zhang M."/>
            <person name="Bachert C."/>
            <person name="Macbeth M.R."/>
            <person name="Linstedt A.D."/>
        </authorList>
    </citation>
    <scope>X-RAY CRYSTALLOGRAPHY (1.90 ANGSTROMS) OF 1-208 OF MUTANT ASP-189</scope>
    <scope>MUTAGENESIS OF SER-189</scope>
    <scope>FUNCTION</scope>
</reference>
<proteinExistence type="evidence at protein level"/>
<evidence type="ECO:0000250" key="1">
    <source>
        <dbReference type="UniProtKB" id="Q99JX3"/>
    </source>
</evidence>
<evidence type="ECO:0000250" key="2">
    <source>
        <dbReference type="UniProtKB" id="Q9R064"/>
    </source>
</evidence>
<evidence type="ECO:0000255" key="3">
    <source>
        <dbReference type="PROSITE-ProRule" id="PRU01212"/>
    </source>
</evidence>
<evidence type="ECO:0000255" key="4">
    <source>
        <dbReference type="PROSITE-ProRule" id="PRU01214"/>
    </source>
</evidence>
<evidence type="ECO:0000256" key="5">
    <source>
        <dbReference type="SAM" id="MobiDB-lite"/>
    </source>
</evidence>
<evidence type="ECO:0000269" key="6">
    <source>
    </source>
</evidence>
<evidence type="ECO:0000269" key="7">
    <source>
    </source>
</evidence>
<evidence type="ECO:0000269" key="8">
    <source>
    </source>
</evidence>
<evidence type="ECO:0000269" key="9">
    <source>
    </source>
</evidence>
<evidence type="ECO:0000269" key="10">
    <source>
    </source>
</evidence>
<evidence type="ECO:0000269" key="11">
    <source>
    </source>
</evidence>
<evidence type="ECO:0000269" key="12">
    <source>
    </source>
</evidence>
<evidence type="ECO:0000269" key="13">
    <source>
    </source>
</evidence>
<evidence type="ECO:0000269" key="14">
    <source>
    </source>
</evidence>
<evidence type="ECO:0000269" key="15">
    <source>
    </source>
</evidence>
<evidence type="ECO:0000269" key="16">
    <source>
    </source>
</evidence>
<evidence type="ECO:0000269" key="17">
    <source>
    </source>
</evidence>
<evidence type="ECO:0000269" key="18">
    <source>
    </source>
</evidence>
<evidence type="ECO:0000269" key="19">
    <source>
    </source>
</evidence>
<evidence type="ECO:0000269" key="20">
    <source>
    </source>
</evidence>
<evidence type="ECO:0000303" key="21">
    <source>
    </source>
</evidence>
<evidence type="ECO:0000303" key="22">
    <source>
    </source>
</evidence>
<evidence type="ECO:0000305" key="23"/>
<evidence type="ECO:0000305" key="24">
    <source>
    </source>
</evidence>
<evidence type="ECO:0007744" key="25">
    <source>
        <dbReference type="PDB" id="4EDJ"/>
    </source>
</evidence>
<evidence type="ECO:0007744" key="26">
    <source>
    </source>
</evidence>
<evidence type="ECO:0007744" key="27">
    <source>
    </source>
</evidence>
<evidence type="ECO:0007744" key="28">
    <source>
    </source>
</evidence>
<evidence type="ECO:0007744" key="29">
    <source>
    </source>
</evidence>
<evidence type="ECO:0007744" key="30">
    <source>
    </source>
</evidence>
<evidence type="ECO:0007744" key="31">
    <source>
    </source>
</evidence>
<evidence type="ECO:0007744" key="32">
    <source>
    </source>
</evidence>
<evidence type="ECO:0007829" key="33">
    <source>
        <dbReference type="PDB" id="3RLE"/>
    </source>
</evidence>
<protein>
    <recommendedName>
        <fullName>Golgi reassembly-stacking protein 2</fullName>
        <shortName>GRS2</shortName>
    </recommendedName>
    <alternativeName>
        <fullName>Golgi phosphoprotein 6</fullName>
        <shortName>GOLPH6</shortName>
    </alternativeName>
    <alternativeName>
        <fullName>Golgi reassembly-stacking protein of 55 kDa</fullName>
        <shortName>GRASP55</shortName>
    </alternativeName>
    <alternativeName>
        <fullName>p59</fullName>
    </alternativeName>
</protein>
<sequence>MGSSQSVEIPGGGTEGYHVLRVQENSPGHRAGLEPFFDFIVSINGSRLNKDNDTLKDLLKANVEKPVKMLIYSSKTLELRETSVTPSNLWGGQGLLGVSIRFCSFDGANENVWHVLEVESNSPAALAGLRPHSDYIIGADTVMNESEDLFSLIETHEAKPLKLYVYNTDTDNCREVIITPNSAWGGEGSLGCGIGYGYLHRIPTRPFEEGKKISLPGQMAGTPITPLKDGFTEVQLSSVNPPSLSPPGTTGIEQSLTGLSISSTPPAVSSVLSTGVPTVPLLPPQVNQSLTSVPPMNPATTLPGLMPLPAGLPNLPNLNLNLPAPHIMPGVGLPELVNPGLPPLPSMPPRNLPGIAPLPLPSEFLPSFPLVPESSSAASSGELLSSLPPTSNAPSDPATTTAKADAASSLTVDVTPPTAKAPTTVEDRVGDSTPVSEKPVSAAVDANASESP</sequence>
<comment type="function">
    <text evidence="1 6 7 14 15 16 19 20">Key structural protein of the Golgi apparatus (PubMed:33301566). The membrane cisternae of the Golgi apparatus adhere to each other to form stacks, which are aligned side by side to form the Golgi ribbon (PubMed:33301566). Acting in concert with GORASP1/GRASP65, is required for the formation and maintenance of the Golgi ribbon, and may be dispensable for the formation of stacks (PubMed:33301566). However, other studies suggest that GORASP2 plays a role in the assembly and membrane stacking of the Golgi cisternae, and in the process by which Golgi stacks reform after breakdown during mitosis and meiosis (PubMed:10487747, PubMed:21515684, PubMed:22523075). May regulate the intracellular transport and presentation of a defined set of transmembrane proteins, such as transmembrane TGFA (PubMed:11101516). Required for normal acrosome formation during spermiogenesis and normal male fertility, probably by promoting colocalization of JAM2 and JAM3 at contact sites between germ cells and Sertoli cells (By similarity). Mediates ER stress-induced unconventional (ER/Golgi-independent) trafficking of core-glycosylated CFTR to cell membrane (PubMed:21884936, PubMed:27062250, PubMed:28067262).</text>
</comment>
<comment type="subunit">
    <text evidence="1 2 7 9 10 12 13 15 19 20">Homodimer. Homooligomer. ER stress induces phosphorylation-dependent monomerization (PubMed:27062250). Interacts with BLZF1/Golgin 45 (PubMed:11739401). Identified in a complex with RAB2 and GORASP2 (PubMed:11739401). Interacts with JAM2 and JAM3 (By similarity). Interacts with members of the p24 cargo receptors (PubMed:11739402). Interacts with CNIH1 and the cytoplasmic domain of transmembrane TGFA, prior its transit in the trans-Golgi (PubMed:11101516, PubMed:17607000). Interacts with KCTD5 (PubMed:19361449). Interacts with TMED2 and TMED3 (By similarity). Interacts with SEC16A in response to ER stress (PubMed:28067262). Interacts (via PDZ GRASP-type 1 domain) with core-glycosylated CFTR in response to ER stress (PubMed:21884936).</text>
</comment>
<comment type="interaction">
    <interactant intactId="EBI-739467">
        <id>Q9H8Y8</id>
    </interactant>
    <interactant intactId="EBI-10308705">
        <id>Q9H7C9</id>
        <label>AAMDC</label>
    </interactant>
    <organismsDiffer>false</organismsDiffer>
    <experiments>3</experiments>
</comment>
<comment type="interaction">
    <interactant intactId="EBI-739467">
        <id>Q9H8Y8</id>
    </interactant>
    <interactant intactId="EBI-3916242">
        <id>Q96HD9</id>
        <label>ACY3</label>
    </interactant>
    <organismsDiffer>false</organismsDiffer>
    <experiments>15</experiments>
</comment>
<comment type="interaction">
    <interactant intactId="EBI-739467">
        <id>Q9H8Y8</id>
    </interactant>
    <interactant intactId="EBI-8637516">
        <id>Q9NXW9</id>
        <label>ALKBH4</label>
    </interactant>
    <organismsDiffer>false</organismsDiffer>
    <experiments>3</experiments>
</comment>
<comment type="interaction">
    <interactant intactId="EBI-739467">
        <id>Q9H8Y8</id>
    </interactant>
    <interactant intactId="EBI-359248">
        <id>Q96GX9</id>
        <label>APIP</label>
    </interactant>
    <organismsDiffer>false</organismsDiffer>
    <experiments>3</experiments>
</comment>
<comment type="interaction">
    <interactant intactId="EBI-739467">
        <id>Q9H8Y8</id>
    </interactant>
    <interactant intactId="EBI-740691">
        <id>O94989</id>
        <label>ARHGEF15</label>
    </interactant>
    <organismsDiffer>false</organismsDiffer>
    <experiments>3</experiments>
</comment>
<comment type="interaction">
    <interactant intactId="EBI-739467">
        <id>Q9H8Y8</id>
    </interactant>
    <interactant intactId="EBI-714543">
        <id>Q15041</id>
        <label>ARL6IP1</label>
    </interactant>
    <organismsDiffer>false</organismsDiffer>
    <experiments>4</experiments>
</comment>
<comment type="interaction">
    <interactant intactId="EBI-739467">
        <id>Q9H8Y8</id>
    </interactant>
    <interactant intactId="EBI-743231">
        <id>O95671</id>
        <label>ASMTL</label>
    </interactant>
    <organismsDiffer>false</organismsDiffer>
    <experiments>3</experiments>
</comment>
<comment type="interaction">
    <interactant intactId="EBI-739467">
        <id>Q9H8Y8</id>
    </interactant>
    <interactant intactId="EBI-711802">
        <id>O75348</id>
        <label>ATP6V1G1</label>
    </interactant>
    <organismsDiffer>false</organismsDiffer>
    <experiments>5</experiments>
</comment>
<comment type="interaction">
    <interactant intactId="EBI-739467">
        <id>Q9H8Y8</id>
    </interactant>
    <interactant intactId="EBI-930964">
        <id>P54253</id>
        <label>ATXN1</label>
    </interactant>
    <organismsDiffer>false</organismsDiffer>
    <experiments>3</experiments>
</comment>
<comment type="interaction">
    <interactant intactId="EBI-739467">
        <id>Q9H8Y8</id>
    </interactant>
    <interactant intactId="EBI-946046">
        <id>P54252</id>
        <label>ATXN3</label>
    </interactant>
    <organismsDiffer>false</organismsDiffer>
    <experiments>3</experiments>
</comment>
<comment type="interaction">
    <interactant intactId="EBI-739467">
        <id>Q9H8Y8</id>
    </interactant>
    <interactant intactId="EBI-724373">
        <id>Q7L4P6</id>
        <label>BEND5</label>
    </interactant>
    <organismsDiffer>false</organismsDiffer>
    <experiments>4</experiments>
</comment>
<comment type="interaction">
    <interactant intactId="EBI-739467">
        <id>Q9H8Y8</id>
    </interactant>
    <interactant intactId="EBI-2548012">
        <id>Q9H2G9</id>
        <label>BLZF1</label>
    </interactant>
    <organismsDiffer>false</organismsDiffer>
    <experiments>4</experiments>
</comment>
<comment type="interaction">
    <interactant intactId="EBI-739467">
        <id>Q9H8Y8</id>
    </interactant>
    <interactant intactId="EBI-311155">
        <id>Q9Y2F9</id>
        <label>BTBD3</label>
    </interactant>
    <organismsDiffer>false</organismsDiffer>
    <experiments>3</experiments>
</comment>
<comment type="interaction">
    <interactant intactId="EBI-739467">
        <id>Q9H8Y8</id>
    </interactant>
    <interactant intactId="EBI-946029">
        <id>Q6P1W5</id>
        <label>C1orf94</label>
    </interactant>
    <organismsDiffer>false</organismsDiffer>
    <experiments>7</experiments>
</comment>
<comment type="interaction">
    <interactant intactId="EBI-739467">
        <id>Q9H8Y8</id>
    </interactant>
    <interactant intactId="EBI-718719">
        <id>Q9Y2V2</id>
        <label>CARHSP1</label>
    </interactant>
    <organismsDiffer>false</organismsDiffer>
    <experiments>3</experiments>
</comment>
<comment type="interaction">
    <interactant intactId="EBI-739467">
        <id>Q9H8Y8</id>
    </interactant>
    <interactant intactId="EBI-744027">
        <id>Q13191</id>
        <label>CBLB</label>
    </interactant>
    <organismsDiffer>false</organismsDiffer>
    <experiments>8</experiments>
</comment>
<comment type="interaction">
    <interactant intactId="EBI-739467">
        <id>Q9H8Y8</id>
    </interactant>
    <interactant intactId="EBI-947308">
        <id>Q9Y3M2</id>
        <label>CBY1</label>
    </interactant>
    <organismsDiffer>false</organismsDiffer>
    <experiments>3</experiments>
</comment>
<comment type="interaction">
    <interactant intactId="EBI-739467">
        <id>Q9H8Y8</id>
    </interactant>
    <interactant intactId="EBI-713148">
        <id>Q9GZT6</id>
        <label>CCDC90B</label>
    </interactant>
    <organismsDiffer>false</organismsDiffer>
    <experiments>3</experiments>
</comment>
<comment type="interaction">
    <interactant intactId="EBI-739467">
        <id>Q9H8Y8</id>
    </interactant>
    <interactant intactId="EBI-9250559">
        <id>P32320</id>
        <label>CDA</label>
    </interactant>
    <organismsDiffer>false</organismsDiffer>
    <experiments>3</experiments>
</comment>
<comment type="interaction">
    <interactant intactId="EBI-739467">
        <id>Q9H8Y8</id>
    </interactant>
    <interactant intactId="EBI-396137">
        <id>Q9UJX2</id>
        <label>CDC23</label>
    </interactant>
    <organismsDiffer>false</organismsDiffer>
    <experiments>9</experiments>
</comment>
<comment type="interaction">
    <interactant intactId="EBI-739467">
        <id>Q9H8Y8</id>
    </interactant>
    <interactant intactId="EBI-746238">
        <id>Q07002</id>
        <label>CDK18</label>
    </interactant>
    <organismsDiffer>false</organismsDiffer>
    <experiments>3</experiments>
</comment>
<comment type="interaction">
    <interactant intactId="EBI-739467">
        <id>Q9H8Y8</id>
    </interactant>
    <interactant intactId="EBI-745859">
        <id>P55273</id>
        <label>CDKN2D</label>
    </interactant>
    <organismsDiffer>false</organismsDiffer>
    <experiments>3</experiments>
</comment>
<comment type="interaction">
    <interactant intactId="EBI-739467">
        <id>Q9H8Y8</id>
    </interactant>
    <interactant intactId="EBI-742887">
        <id>Q8TAP6</id>
        <label>CEP76</label>
    </interactant>
    <organismsDiffer>false</organismsDiffer>
    <experiments>3</experiments>
</comment>
<comment type="interaction">
    <interactant intactId="EBI-739467">
        <id>Q9H8Y8</id>
    </interactant>
    <interactant intactId="EBI-349854">
        <id>P13569</id>
        <label>CFTR</label>
    </interactant>
    <organismsDiffer>false</organismsDiffer>
    <experiments>6</experiments>
</comment>
<comment type="interaction">
    <interactant intactId="EBI-739467">
        <id>Q9H8Y8</id>
    </interactant>
    <interactant intactId="EBI-723153">
        <id>Q9UFW8</id>
        <label>CGGBP1</label>
    </interactant>
    <organismsDiffer>false</organismsDiffer>
    <experiments>3</experiments>
</comment>
<comment type="interaction">
    <interactant intactId="EBI-739467">
        <id>Q9H8Y8</id>
    </interactant>
    <interactant intactId="EBI-1057156">
        <id>Q9HD42</id>
        <label>CHMP1A</label>
    </interactant>
    <organismsDiffer>false</organismsDiffer>
    <experiments>3</experiments>
</comment>
<comment type="interaction">
    <interactant intactId="EBI-739467">
        <id>Q9H8Y8</id>
    </interactant>
    <interactant intactId="EBI-310892">
        <id>Q9UHC6</id>
        <label>CNTNAP2</label>
    </interactant>
    <organismsDiffer>false</organismsDiffer>
    <experiments>3</experiments>
</comment>
<comment type="interaction">
    <interactant intactId="EBI-739467">
        <id>Q9H8Y8</id>
    </interactant>
    <interactant intactId="EBI-6875961">
        <id>P02489</id>
        <label>CRYAA</label>
    </interactant>
    <organismsDiffer>false</organismsDiffer>
    <experiments>12</experiments>
</comment>
<comment type="interaction">
    <interactant intactId="EBI-739467">
        <id>Q9H8Y8</id>
    </interactant>
    <interactant intactId="EBI-739060">
        <id>P02511</id>
        <label>CRYAB</label>
    </interactant>
    <organismsDiffer>false</organismsDiffer>
    <experiments>3</experiments>
</comment>
<comment type="interaction">
    <interactant intactId="EBI-739467">
        <id>Q9H8Y8</id>
    </interactant>
    <interactant intactId="EBI-9087876">
        <id>P48730-2</id>
        <label>CSNK1D</label>
    </interactant>
    <organismsDiffer>false</organismsDiffer>
    <experiments>3</experiments>
</comment>
<comment type="interaction">
    <interactant intactId="EBI-739467">
        <id>Q9H8Y8</id>
    </interactant>
    <interactant intactId="EBI-739870">
        <id>P32321</id>
        <label>DCTD</label>
    </interactant>
    <organismsDiffer>false</organismsDiffer>
    <experiments>7</experiments>
</comment>
<comment type="interaction">
    <interactant intactId="EBI-739467">
        <id>Q9H8Y8</id>
    </interactant>
    <interactant intactId="EBI-930865">
        <id>Q14565</id>
        <label>DMC1</label>
    </interactant>
    <organismsDiffer>false</organismsDiffer>
    <experiments>8</experiments>
</comment>
<comment type="interaction">
    <interactant intactId="EBI-739467">
        <id>Q9H8Y8</id>
    </interactant>
    <interactant intactId="EBI-11514233">
        <id>P59910</id>
        <label>DNAJB13</label>
    </interactant>
    <organismsDiffer>false</organismsDiffer>
    <experiments>3</experiments>
</comment>
<comment type="interaction">
    <interactant intactId="EBI-739467">
        <id>Q9H8Y8</id>
    </interactant>
    <interactant intactId="EBI-1104711">
        <id>Q16555</id>
        <label>DPYSL2</label>
    </interactant>
    <organismsDiffer>false</organismsDiffer>
    <experiments>15</experiments>
</comment>
<comment type="interaction">
    <interactant intactId="EBI-739467">
        <id>Q9H8Y8</id>
    </interactant>
    <interactant intactId="EBI-10241443">
        <id>Q494R4</id>
        <label>DRC12</label>
    </interactant>
    <organismsDiffer>false</organismsDiffer>
    <experiments>4</experiments>
</comment>
<comment type="interaction">
    <interactant intactId="EBI-739467">
        <id>Q9H8Y8</id>
    </interactant>
    <interactant intactId="EBI-7357329">
        <id>Q9H596</id>
        <label>DUSP21</label>
    </interactant>
    <organismsDiffer>false</organismsDiffer>
    <experiments>7</experiments>
</comment>
<comment type="interaction">
    <interactant intactId="EBI-739467">
        <id>Q9H8Y8</id>
    </interactant>
    <interactant intactId="EBI-6591081">
        <id>Q13115</id>
        <label>DUSP4</label>
    </interactant>
    <organismsDiffer>false</organismsDiffer>
    <experiments>3</experiments>
</comment>
<comment type="interaction">
    <interactant intactId="EBI-739467">
        <id>Q9H8Y8</id>
    </interactant>
    <interactant intactId="EBI-13332019">
        <id>O43781-2</id>
        <label>DYRK3</label>
    </interactant>
    <organismsDiffer>false</organismsDiffer>
    <experiments>5</experiments>
</comment>
<comment type="interaction">
    <interactant intactId="EBI-739467">
        <id>Q9H8Y8</id>
    </interactant>
    <interactant intactId="EBI-2807146">
        <id>Q9NTX5</id>
        <label>ECHDC1</label>
    </interactant>
    <organismsDiffer>false</organismsDiffer>
    <experiments>3</experiments>
</comment>
<comment type="interaction">
    <interactant intactId="EBI-739467">
        <id>Q9H8Y8</id>
    </interactant>
    <interactant intactId="EBI-491065">
        <id>Q14232</id>
        <label>EIF2B1</label>
    </interactant>
    <organismsDiffer>false</organismsDiffer>
    <experiments>8</experiments>
</comment>
<comment type="interaction">
    <interactant intactId="EBI-739467">
        <id>Q9H8Y8</id>
    </interactant>
    <interactant intactId="EBI-3197883">
        <id>Q9NT22</id>
        <label>EMILIN3</label>
    </interactant>
    <organismsDiffer>false</organismsDiffer>
    <experiments>5</experiments>
</comment>
<comment type="interaction">
    <interactant intactId="EBI-739467">
        <id>Q9H8Y8</id>
    </interactant>
    <interactant intactId="EBI-713221">
        <id>Q8TC92</id>
        <label>ENOX1</label>
    </interactant>
    <organismsDiffer>false</organismsDiffer>
    <experiments>3</experiments>
</comment>
<comment type="interaction">
    <interactant intactId="EBI-739467">
        <id>Q9H8Y8</id>
    </interactant>
    <interactant intactId="EBI-715318">
        <id>O95571</id>
        <label>ETHE1</label>
    </interactant>
    <organismsDiffer>false</organismsDiffer>
    <experiments>3</experiments>
</comment>
<comment type="interaction">
    <interactant intactId="EBI-739467">
        <id>Q9H8Y8</id>
    </interactant>
    <interactant intactId="EBI-13371226">
        <id>Q9NYK6-3</id>
        <label>EURL</label>
    </interactant>
    <organismsDiffer>false</organismsDiffer>
    <experiments>5</experiments>
</comment>
<comment type="interaction">
    <interactant intactId="EBI-739467">
        <id>Q9H8Y8</id>
    </interactant>
    <interactant intactId="EBI-4290773">
        <id>Q92562</id>
        <label>FIG4</label>
    </interactant>
    <organismsDiffer>false</organismsDiffer>
    <experiments>3</experiments>
</comment>
<comment type="interaction">
    <interactant intactId="EBI-739467">
        <id>Q9H8Y8</id>
    </interactant>
    <interactant intactId="EBI-8468945">
        <id>Q8TAK5</id>
        <label>GABPB2</label>
    </interactant>
    <organismsDiffer>false</organismsDiffer>
    <experiments>6</experiments>
</comment>
<comment type="interaction">
    <interactant intactId="EBI-739467">
        <id>Q9H8Y8</id>
    </interactant>
    <interactant intactId="EBI-717760">
        <id>O60262</id>
        <label>GNG7</label>
    </interactant>
    <organismsDiffer>false</organismsDiffer>
    <experiments>6</experiments>
</comment>
<comment type="interaction">
    <interactant intactId="EBI-739467">
        <id>Q9H8Y8</id>
    </interactant>
    <interactant intactId="EBI-10220715">
        <id>P63211</id>
        <label>GNGT1</label>
    </interactant>
    <organismsDiffer>false</organismsDiffer>
    <experiments>5</experiments>
</comment>
<comment type="interaction">
    <interactant intactId="EBI-739467">
        <id>Q9H8Y8</id>
    </interactant>
    <interactant intactId="EBI-618309">
        <id>Q08379</id>
        <label>GOLGA2</label>
    </interactant>
    <organismsDiffer>false</organismsDiffer>
    <experiments>11</experiments>
</comment>
<comment type="interaction">
    <interactant intactId="EBI-739467">
        <id>Q9H8Y8</id>
    </interactant>
    <interactant intactId="EBI-10268729">
        <id>Q8N9W4-2</id>
        <label>GOLGA6L2</label>
    </interactant>
    <organismsDiffer>false</organismsDiffer>
    <experiments>3</experiments>
</comment>
<comment type="interaction">
    <interactant intactId="EBI-739467">
        <id>Q9H8Y8</id>
    </interactant>
    <interactant intactId="EBI-748043">
        <id>O43708</id>
        <label>GSTZ1</label>
    </interactant>
    <organismsDiffer>false</organismsDiffer>
    <experiments>3</experiments>
</comment>
<comment type="interaction">
    <interactant intactId="EBI-739467">
        <id>Q9H8Y8</id>
    </interactant>
    <interactant intactId="EBI-372530">
        <id>Q9UHL9</id>
        <label>GTF2IRD1</label>
    </interactant>
    <organismsDiffer>false</organismsDiffer>
    <experiments>3</experiments>
</comment>
<comment type="interaction">
    <interactant intactId="EBI-739467">
        <id>Q9H8Y8</id>
    </interactant>
    <interactant intactId="EBI-11955357">
        <id>Q00444</id>
        <label>HOXC5</label>
    </interactant>
    <organismsDiffer>false</organismsDiffer>
    <experiments>3</experiments>
</comment>
<comment type="interaction">
    <interactant intactId="EBI-739467">
        <id>Q9H8Y8</id>
    </interactant>
    <interactant intactId="EBI-748664">
        <id>O75506</id>
        <label>HSBP1</label>
    </interactant>
    <organismsDiffer>false</organismsDiffer>
    <experiments>3</experiments>
</comment>
<comment type="interaction">
    <interactant intactId="EBI-739467">
        <id>Q9H8Y8</id>
    </interactant>
    <interactant intactId="EBI-747101">
        <id>Q9Y547</id>
        <label>IFT25</label>
    </interactant>
    <organismsDiffer>false</organismsDiffer>
    <experiments>3</experiments>
</comment>
<comment type="interaction">
    <interactant intactId="EBI-739467">
        <id>Q9H8Y8</id>
    </interactant>
    <interactant intactId="EBI-10311936">
        <id>Q9NQC1-2</id>
        <label>JADE2</label>
    </interactant>
    <organismsDiffer>false</organismsDiffer>
    <experiments>3</experiments>
</comment>
<comment type="interaction">
    <interactant intactId="EBI-739467">
        <id>Q9H8Y8</id>
    </interactant>
    <interactant intactId="EBI-742916">
        <id>Q8WZ19</id>
        <label>KCTD13</label>
    </interactant>
    <organismsDiffer>false</organismsDiffer>
    <experiments>3</experiments>
</comment>
<comment type="interaction">
    <interactant intactId="EBI-739467">
        <id>Q9H8Y8</id>
    </interactant>
    <interactant intactId="EBI-11954971">
        <id>Q96MP8-2</id>
        <label>KCTD7</label>
    </interactant>
    <organismsDiffer>false</organismsDiffer>
    <experiments>5</experiments>
</comment>
<comment type="interaction">
    <interactant intactId="EBI-739467">
        <id>Q9H8Y8</id>
    </interactant>
    <interactant intactId="EBI-4397613">
        <id>Q7L273</id>
        <label>KCTD9</label>
    </interactant>
    <organismsDiffer>false</organismsDiffer>
    <experiments>7</experiments>
</comment>
<comment type="interaction">
    <interactant intactId="EBI-739467">
        <id>Q9H8Y8</id>
    </interactant>
    <interactant intactId="EBI-2125614">
        <id>Q9BVG8</id>
        <label>KIFC3</label>
    </interactant>
    <organismsDiffer>false</organismsDiffer>
    <experiments>3</experiments>
</comment>
<comment type="interaction">
    <interactant intactId="EBI-739467">
        <id>Q9H8Y8</id>
    </interactant>
    <interactant intactId="EBI-14069005">
        <id>Q9BVG8-5</id>
        <label>KIFC3</label>
    </interactant>
    <organismsDiffer>false</organismsDiffer>
    <experiments>3</experiments>
</comment>
<comment type="interaction">
    <interactant intactId="EBI-739467">
        <id>Q9H8Y8</id>
    </interactant>
    <interactant intactId="EBI-11993296">
        <id>Q6L8G4</id>
        <label>KRTAP5-11</label>
    </interactant>
    <organismsDiffer>false</organismsDiffer>
    <experiments>5</experiments>
</comment>
<comment type="interaction">
    <interactant intactId="EBI-739467">
        <id>Q9H8Y8</id>
    </interactant>
    <interactant intactId="EBI-2341787">
        <id>Q17RB8</id>
        <label>LONRF1</label>
    </interactant>
    <organismsDiffer>false</organismsDiffer>
    <experiments>10</experiments>
</comment>
<comment type="interaction">
    <interactant intactId="EBI-739467">
        <id>Q9H8Y8</id>
    </interactant>
    <interactant intactId="EBI-373144">
        <id>Q9GZQ8</id>
        <label>MAP1LC3B</label>
    </interactant>
    <organismsDiffer>false</organismsDiffer>
    <experiments>6</experiments>
</comment>
<comment type="interaction">
    <interactant intactId="EBI-739467">
        <id>Q9H8Y8</id>
    </interactant>
    <interactant intactId="EBI-12072296">
        <id>O95460-2</id>
        <label>MATN4</label>
    </interactant>
    <organismsDiffer>false</organismsDiffer>
    <experiments>3</experiments>
</comment>
<comment type="interaction">
    <interactant intactId="EBI-739467">
        <id>Q9H8Y8</id>
    </interactant>
    <interactant intactId="EBI-10172526">
        <id>Q9UJV3-2</id>
        <label>MID2</label>
    </interactant>
    <organismsDiffer>false</organismsDiffer>
    <experiments>6</experiments>
</comment>
<comment type="interaction">
    <interactant intactId="EBI-739467">
        <id>Q9H8Y8</id>
    </interactant>
    <interactant intactId="EBI-6137472">
        <id>Q9BRT3</id>
        <label>MIEN1</label>
    </interactant>
    <organismsDiffer>false</organismsDiffer>
    <experiments>3</experiments>
</comment>
<comment type="interaction">
    <interactant intactId="EBI-739467">
        <id>Q9H8Y8</id>
    </interactant>
    <interactant intactId="EBI-725982">
        <id>Q502X0</id>
        <label>MORN2</label>
    </interactant>
    <organismsDiffer>false</organismsDiffer>
    <experiments>3</experiments>
</comment>
<comment type="interaction">
    <interactant intactId="EBI-739467">
        <id>Q9H8Y8</id>
    </interactant>
    <interactant intactId="EBI-11603426">
        <id>Q8TAP9</id>
        <label>MPLKIP</label>
    </interactant>
    <organismsDiffer>false</organismsDiffer>
    <experiments>5</experiments>
</comment>
<comment type="interaction">
    <interactant intactId="EBI-739467">
        <id>Q9H8Y8</id>
    </interactant>
    <interactant intactId="EBI-740310">
        <id>O60682</id>
        <label>MSC</label>
    </interactant>
    <organismsDiffer>false</organismsDiffer>
    <experiments>5</experiments>
</comment>
<comment type="interaction">
    <interactant intactId="EBI-739467">
        <id>Q9H8Y8</id>
    </interactant>
    <interactant intactId="EBI-12247808">
        <id>Q5VTT5-2</id>
        <label>MYOM3</label>
    </interactant>
    <organismsDiffer>false</organismsDiffer>
    <experiments>3</experiments>
</comment>
<comment type="interaction">
    <interactant intactId="EBI-739467">
        <id>Q9H8Y8</id>
    </interactant>
    <interactant intactId="EBI-2859639">
        <id>Q5HYW2</id>
        <label>NHSL2</label>
    </interactant>
    <organismsDiffer>false</organismsDiffer>
    <experiments>3</experiments>
</comment>
<comment type="interaction">
    <interactant intactId="EBI-739467">
        <id>Q9H8Y8</id>
    </interactant>
    <interactant intactId="EBI-3917542">
        <id>Q9HAN9</id>
        <label>NMNAT1</label>
    </interactant>
    <organismsDiffer>false</organismsDiffer>
    <experiments>3</experiments>
</comment>
<comment type="interaction">
    <interactant intactId="EBI-739467">
        <id>Q9H8Y8</id>
    </interactant>
    <interactant intactId="EBI-358466">
        <id>P16083</id>
        <label>NQO2</label>
    </interactant>
    <organismsDiffer>false</organismsDiffer>
    <experiments>5</experiments>
</comment>
<comment type="interaction">
    <interactant intactId="EBI-739467">
        <id>Q9H8Y8</id>
    </interactant>
    <interactant intactId="EBI-721623">
        <id>Q9UKK9</id>
        <label>NUDT5</label>
    </interactant>
    <organismsDiffer>false</organismsDiffer>
    <experiments>3</experiments>
</comment>
<comment type="interaction">
    <interactant intactId="EBI-739467">
        <id>Q9H8Y8</id>
    </interactant>
    <interactant intactId="EBI-1044287">
        <id>P11926</id>
        <label>ODC1</label>
    </interactant>
    <organismsDiffer>false</organismsDiffer>
    <experiments>11</experiments>
</comment>
<comment type="interaction">
    <interactant intactId="EBI-739467">
        <id>Q9H8Y8</id>
    </interactant>
    <interactant intactId="EBI-740475">
        <id>P61457</id>
        <label>PCBD1</label>
    </interactant>
    <organismsDiffer>false</organismsDiffer>
    <experiments>6</experiments>
</comment>
<comment type="interaction">
    <interactant intactId="EBI-739467">
        <id>Q9H8Y8</id>
    </interactant>
    <interactant intactId="EBI-742764">
        <id>O76083</id>
        <label>PDE9A</label>
    </interactant>
    <organismsDiffer>false</organismsDiffer>
    <experiments>4</experiments>
</comment>
<comment type="interaction">
    <interactant intactId="EBI-739467">
        <id>Q9H8Y8</id>
    </interactant>
    <interactant intactId="EBI-10171633">
        <id>Q96PV4</id>
        <label>PNMA5</label>
    </interactant>
    <organismsDiffer>false</organismsDiffer>
    <experiments>7</experiments>
</comment>
<comment type="interaction">
    <interactant intactId="EBI-739467">
        <id>Q9H8Y8</id>
    </interactant>
    <interactant intactId="EBI-748336">
        <id>P30048</id>
        <label>PRDX3</label>
    </interactant>
    <organismsDiffer>false</organismsDiffer>
    <experiments>6</experiments>
</comment>
<comment type="interaction">
    <interactant intactId="EBI-739467">
        <id>Q9H8Y8</id>
    </interactant>
    <interactant intactId="EBI-1053424">
        <id>O43741</id>
        <label>PRKAB2</label>
    </interactant>
    <organismsDiffer>false</organismsDiffer>
    <experiments>3</experiments>
</comment>
<comment type="interaction">
    <interactant intactId="EBI-739467">
        <id>Q9H8Y8</id>
    </interactant>
    <interactant intactId="EBI-749195">
        <id>P60891</id>
        <label>PRPS1</label>
    </interactant>
    <organismsDiffer>false</organismsDiffer>
    <experiments>6</experiments>
</comment>
<comment type="interaction">
    <interactant intactId="EBI-739467">
        <id>Q9H8Y8</id>
    </interactant>
    <interactant intactId="EBI-348380">
        <id>P25788</id>
        <label>PSMA3</label>
    </interactant>
    <organismsDiffer>false</organismsDiffer>
    <experiments>3</experiments>
</comment>
<comment type="interaction">
    <interactant intactId="EBI-739467">
        <id>Q9H8Y8</id>
    </interactant>
    <interactant intactId="EBI-357648">
        <id>Q13200</id>
        <label>PSMD2</label>
    </interactant>
    <organismsDiffer>false</organismsDiffer>
    <experiments>3</experiments>
</comment>
<comment type="interaction">
    <interactant intactId="EBI-739467">
        <id>Q9H8Y8</id>
    </interactant>
    <interactant intactId="EBI-359701">
        <id>Q15008</id>
        <label>PSMD6</label>
    </interactant>
    <organismsDiffer>false</organismsDiffer>
    <experiments>5</experiments>
</comment>
<comment type="interaction">
    <interactant intactId="EBI-739467">
        <id>Q9H8Y8</id>
    </interactant>
    <interactant intactId="EBI-10179046">
        <id>O00194</id>
        <label>RAB27B</label>
    </interactant>
    <organismsDiffer>false</organismsDiffer>
    <experiments>3</experiments>
</comment>
<comment type="interaction">
    <interactant intactId="EBI-739467">
        <id>Q9H8Y8</id>
    </interactant>
    <interactant intactId="EBI-3048577">
        <id>Q14964</id>
        <label>RAB39A</label>
    </interactant>
    <organismsDiffer>false</organismsDiffer>
    <experiments>3</experiments>
</comment>
<comment type="interaction">
    <interactant intactId="EBI-739467">
        <id>Q9H8Y8</id>
    </interactant>
    <interactant intactId="EBI-12068216">
        <id>Q8TBY0</id>
        <label>RBM46</label>
    </interactant>
    <organismsDiffer>false</organismsDiffer>
    <experiments>3</experiments>
</comment>
<comment type="interaction">
    <interactant intactId="EBI-739467">
        <id>Q9H8Y8</id>
    </interactant>
    <interactant intactId="EBI-712355">
        <id>O15211</id>
        <label>RGL2</label>
    </interactant>
    <organismsDiffer>false</organismsDiffer>
    <experiments>3</experiments>
</comment>
<comment type="interaction">
    <interactant intactId="EBI-739467">
        <id>Q9H8Y8</id>
    </interactant>
    <interactant intactId="EBI-10211517">
        <id>P49796-8</id>
        <label>RGS3</label>
    </interactant>
    <organismsDiffer>false</organismsDiffer>
    <experiments>3</experiments>
</comment>
<comment type="interaction">
    <interactant intactId="EBI-739467">
        <id>Q9H8Y8</id>
    </interactant>
    <interactant intactId="EBI-17589229">
        <id>Q6NTF9-3</id>
        <label>RHBDD2</label>
    </interactant>
    <organismsDiffer>false</organismsDiffer>
    <experiments>3</experiments>
</comment>
<comment type="interaction">
    <interactant intactId="EBI-739467">
        <id>Q9H8Y8</id>
    </interactant>
    <interactant intactId="EBI-744831">
        <id>P49247</id>
        <label>RPIA</label>
    </interactant>
    <organismsDiffer>false</organismsDiffer>
    <experiments>8</experiments>
</comment>
<comment type="interaction">
    <interactant intactId="EBI-739467">
        <id>Q9H8Y8</id>
    </interactant>
    <interactant intactId="EBI-745846">
        <id>P57086</id>
        <label>SCAND1</label>
    </interactant>
    <organismsDiffer>false</organismsDiffer>
    <experiments>6</experiments>
</comment>
<comment type="interaction">
    <interactant intactId="EBI-739467">
        <id>Q9H8Y8</id>
    </interactant>
    <interactant intactId="EBI-693002">
        <id>Q8WYJ6</id>
        <label>SEPTIN1</label>
    </interactant>
    <organismsDiffer>false</organismsDiffer>
    <experiments>3</experiments>
</comment>
<comment type="interaction">
    <interactant intactId="EBI-739467">
        <id>Q9H8Y8</id>
    </interactant>
    <interactant intactId="EBI-2009297">
        <id>Q6ZU15</id>
        <label>SEPTIN14</label>
    </interactant>
    <organismsDiffer>false</organismsDiffer>
    <experiments>3</experiments>
</comment>
<comment type="interaction">
    <interactant intactId="EBI-739467">
        <id>Q9H8Y8</id>
    </interactant>
    <interactant intactId="EBI-715117">
        <id>P34896</id>
        <label>SHMT1</label>
    </interactant>
    <organismsDiffer>false</organismsDiffer>
    <experiments>3</experiments>
</comment>
<comment type="interaction">
    <interactant intactId="EBI-739467">
        <id>Q9H8Y8</id>
    </interactant>
    <interactant intactId="EBI-12938570">
        <id>Q16560-2</id>
        <label>SNRNP35</label>
    </interactant>
    <organismsDiffer>false</organismsDiffer>
    <experiments>3</experiments>
</comment>
<comment type="interaction">
    <interactant intactId="EBI-739467">
        <id>Q9H8Y8</id>
    </interactant>
    <interactant intactId="EBI-3923644">
        <id>Q6ZVD7</id>
        <label>STOX1</label>
    </interactant>
    <organismsDiffer>false</organismsDiffer>
    <experiments>4</experiments>
</comment>
<comment type="interaction">
    <interactant intactId="EBI-739467">
        <id>Q9H8Y8</id>
    </interactant>
    <interactant intactId="EBI-1054248">
        <id>Q01995</id>
        <label>TAGLN</label>
    </interactant>
    <organismsDiffer>false</organismsDiffer>
    <experiments>6</experiments>
</comment>
<comment type="interaction">
    <interactant intactId="EBI-739467">
        <id>Q9H8Y8</id>
    </interactant>
    <interactant intactId="EBI-533224">
        <id>P15884</id>
        <label>TCF4</label>
    </interactant>
    <organismsDiffer>false</organismsDiffer>
    <experiments>4</experiments>
</comment>
<comment type="interaction">
    <interactant intactId="EBI-739467">
        <id>Q9H8Y8</id>
    </interactant>
    <interactant intactId="EBI-8644516">
        <id>Q9BXF9</id>
        <label>TEKT3</label>
    </interactant>
    <organismsDiffer>false</organismsDiffer>
    <experiments>4</experiments>
</comment>
<comment type="interaction">
    <interactant intactId="EBI-739467">
        <id>Q9H8Y8</id>
    </interactant>
    <interactant intactId="EBI-717810">
        <id>Q08117</id>
        <label>TLE5</label>
    </interactant>
    <organismsDiffer>false</organismsDiffer>
    <experiments>4</experiments>
</comment>
<comment type="interaction">
    <interactant intactId="EBI-739467">
        <id>Q9H8Y8</id>
    </interactant>
    <interactant intactId="EBI-11741437">
        <id>Q08117-2</id>
        <label>TLE5</label>
    </interactant>
    <organismsDiffer>false</organismsDiffer>
    <experiments>3</experiments>
</comment>
<comment type="interaction">
    <interactant intactId="EBI-739467">
        <id>Q9H8Y8</id>
    </interactant>
    <interactant intactId="EBI-739588">
        <id>Q96S44</id>
        <label>TP53RK</label>
    </interactant>
    <organismsDiffer>false</organismsDiffer>
    <experiments>3</experiments>
</comment>
<comment type="interaction">
    <interactant intactId="EBI-739467">
        <id>Q9H8Y8</id>
    </interactant>
    <interactant intactId="EBI-3956833">
        <id>P17752</id>
        <label>TPH1</label>
    </interactant>
    <organismsDiffer>false</organismsDiffer>
    <experiments>5</experiments>
</comment>
<comment type="interaction">
    <interactant intactId="EBI-739467">
        <id>Q9H8Y8</id>
    </interactant>
    <interactant intactId="EBI-359224">
        <id>Q13077</id>
        <label>TRAF1</label>
    </interactant>
    <organismsDiffer>false</organismsDiffer>
    <experiments>7</experiments>
</comment>
<comment type="interaction">
    <interactant intactId="EBI-739467">
        <id>Q9H8Y8</id>
    </interactant>
    <interactant intactId="EBI-355744">
        <id>Q12933</id>
        <label>TRAF2</label>
    </interactant>
    <organismsDiffer>false</organismsDiffer>
    <experiments>8</experiments>
</comment>
<comment type="interaction">
    <interactant intactId="EBI-739467">
        <id>Q9H8Y8</id>
    </interactant>
    <interactant intactId="EBI-3650647">
        <id>Q9BUZ4</id>
        <label>TRAF4</label>
    </interactant>
    <organismsDiffer>false</organismsDiffer>
    <experiments>4</experiments>
</comment>
<comment type="interaction">
    <interactant intactId="EBI-739467">
        <id>Q9H8Y8</id>
    </interactant>
    <interactant intactId="EBI-523498">
        <id>O00463</id>
        <label>TRAF5</label>
    </interactant>
    <organismsDiffer>false</organismsDiffer>
    <experiments>3</experiments>
</comment>
<comment type="interaction">
    <interactant intactId="EBI-739467">
        <id>Q9H8Y8</id>
    </interactant>
    <interactant intactId="EBI-8451480">
        <id>O75865-2</id>
        <label>TRAPPC6A</label>
    </interactant>
    <organismsDiffer>false</organismsDiffer>
    <experiments>5</experiments>
</comment>
<comment type="interaction">
    <interactant intactId="EBI-739467">
        <id>Q9H8Y8</id>
    </interactant>
    <interactant intactId="EBI-2130415">
        <id>O00635</id>
        <label>TRIM38</label>
    </interactant>
    <organismsDiffer>false</organismsDiffer>
    <experiments>6</experiments>
</comment>
<comment type="interaction">
    <interactant intactId="EBI-739467">
        <id>Q9H8Y8</id>
    </interactant>
    <interactant intactId="EBI-12403619">
        <id>Q86TN4-2</id>
        <label>TRPT1</label>
    </interactant>
    <organismsDiffer>false</organismsDiffer>
    <experiments>3</experiments>
</comment>
<comment type="interaction">
    <interactant intactId="EBI-739467">
        <id>Q9H8Y8</id>
    </interactant>
    <interactant intactId="EBI-12034704">
        <id>Q15714-2</id>
        <label>TSC22D1</label>
    </interactant>
    <organismsDiffer>false</organismsDiffer>
    <experiments>8</experiments>
</comment>
<comment type="interaction">
    <interactant intactId="EBI-739467">
        <id>Q9H8Y8</id>
    </interactant>
    <interactant intactId="EBI-372432">
        <id>Q8WW01</id>
        <label>TSEN15</label>
    </interactant>
    <organismsDiffer>false</organismsDiffer>
    <experiments>3</experiments>
</comment>
<comment type="interaction">
    <interactant intactId="EBI-739467">
        <id>Q9H8Y8</id>
    </interactant>
    <interactant intactId="EBI-1044160">
        <id>Q15631</id>
        <label>TSN</label>
    </interactant>
    <organismsDiffer>false</organismsDiffer>
    <experiments>6</experiments>
</comment>
<comment type="interaction">
    <interactant intactId="EBI-739467">
        <id>Q9H8Y8</id>
    </interactant>
    <interactant intactId="EBI-948354">
        <id>Q6DKK2</id>
        <label>TTC19</label>
    </interactant>
    <organismsDiffer>false</organismsDiffer>
    <experiments>5</experiments>
</comment>
<comment type="interaction">
    <interactant intactId="EBI-739467">
        <id>Q9H8Y8</id>
    </interactant>
    <interactant intactId="EBI-359793">
        <id>P40222</id>
        <label>TXLNA</label>
    </interactant>
    <organismsDiffer>false</organismsDiffer>
    <experiments>7</experiments>
</comment>
<comment type="interaction">
    <interactant intactId="EBI-739467">
        <id>Q9H8Y8</id>
    </interactant>
    <interactant intactId="EBI-720977">
        <id>Q9H832</id>
        <label>UBE2Z</label>
    </interactant>
    <organismsDiffer>false</organismsDiffer>
    <experiments>3</experiments>
</comment>
<comment type="interaction">
    <interactant intactId="EBI-739467">
        <id>Q9H8Y8</id>
    </interactant>
    <interactant intactId="EBI-12876508">
        <id>O95164</id>
        <label>UBL3</label>
    </interactant>
    <organismsDiffer>false</organismsDiffer>
    <experiments>3</experiments>
</comment>
<comment type="interaction">
    <interactant intactId="EBI-739467">
        <id>Q9H8Y8</id>
    </interactant>
    <interactant intactId="EBI-4400866">
        <id>Q9H9H4</id>
        <label>VPS37B</label>
    </interactant>
    <organismsDiffer>false</organismsDiffer>
    <experiments>3</experiments>
</comment>
<comment type="interaction">
    <interactant intactId="EBI-739467">
        <id>Q9H8Y8</id>
    </interactant>
    <interactant intactId="EBI-2799833">
        <id>Q8N1B4</id>
        <label>VPS52</label>
    </interactant>
    <organismsDiffer>false</organismsDiffer>
    <experiments>3</experiments>
</comment>
<comment type="interaction">
    <interactant intactId="EBI-739467">
        <id>Q9H8Y8</id>
    </interactant>
    <interactant intactId="EBI-12079490">
        <id>Q9NQW7-3</id>
        <label>XPNPEP1</label>
    </interactant>
    <organismsDiffer>false</organismsDiffer>
    <experiments>3</experiments>
</comment>
<comment type="interaction">
    <interactant intactId="EBI-739467">
        <id>Q9H8Y8</id>
    </interactant>
    <interactant intactId="EBI-740037">
        <id>O96006</id>
        <label>ZBED1</label>
    </interactant>
    <organismsDiffer>false</organismsDiffer>
    <experiments>3</experiments>
</comment>
<comment type="interaction">
    <interactant intactId="EBI-739467">
        <id>Q9H8Y8</id>
    </interactant>
    <interactant intactId="EBI-10176632">
        <id>O43829</id>
        <label>ZBTB14</label>
    </interactant>
    <organismsDiffer>false</organismsDiffer>
    <experiments>4</experiments>
</comment>
<comment type="interaction">
    <interactant intactId="EBI-739467">
        <id>Q9H8Y8</id>
    </interactant>
    <interactant intactId="EBI-746595">
        <id>Q96E35</id>
        <label>ZMYND19</label>
    </interactant>
    <organismsDiffer>false</organismsDiffer>
    <experiments>3</experiments>
</comment>
<comment type="interaction">
    <interactant intactId="EBI-739467">
        <id>Q9H8Y8</id>
    </interactant>
    <interactant intactId="EBI-2688184">
        <id>Q9UQR1</id>
        <label>ZNF148</label>
    </interactant>
    <organismsDiffer>false</organismsDiffer>
    <experiments>3</experiments>
</comment>
<comment type="interaction">
    <interactant intactId="EBI-739467">
        <id>Q9H8Y8</id>
    </interactant>
    <interactant intactId="EBI-11742222">
        <id>Q9UQR1-2</id>
        <label>ZNF148</label>
    </interactant>
    <organismsDiffer>false</organismsDiffer>
    <experiments>5</experiments>
</comment>
<comment type="interaction">
    <interactant intactId="EBI-739467">
        <id>Q9H8Y8</id>
    </interactant>
    <interactant intactId="EBI-6927928">
        <id>PRO_0000045603</id>
        <dbReference type="UniProtKB" id="Q99IB8"/>
    </interactant>
    <organismsDiffer>true</organismsDiffer>
    <experiments>3</experiments>
</comment>
<comment type="subcellular location">
    <subcellularLocation>
        <location evidence="6 7 19">Golgi apparatus membrane</location>
        <topology evidence="7">Lipid-anchor</topology>
    </subcellularLocation>
    <subcellularLocation>
        <location evidence="19">Endoplasmic reticulum membrane</location>
    </subcellularLocation>
    <subcellularLocation>
        <location evidence="20">Golgi apparatus</location>
    </subcellularLocation>
    <text evidence="2 19 20">Detected in the intermediate Golgi, membrane-associated (By similarity). ER stress triggers its relocalization from Golgi to ER membrane (PubMed:27062250, PubMed:28067262).</text>
</comment>
<comment type="alternative products">
    <event type="alternative splicing"/>
    <isoform>
        <id>Q9H8Y8-1</id>
        <name>1</name>
        <sequence type="displayed"/>
    </isoform>
    <isoform>
        <id>Q9H8Y8-2</id>
        <name>2</name>
        <sequence type="described" ref="VSP_011300"/>
    </isoform>
    <isoform>
        <id>Q9H8Y8-3</id>
        <name>3</name>
        <sequence type="described" ref="VSP_054364"/>
    </isoform>
</comment>
<comment type="PTM">
    <text evidence="2 7">Myristoylated (PubMed:11101516). Myristoylation is essential for the Golgi targeting (By similarity).</text>
</comment>
<comment type="PTM">
    <text evidence="7">Palmitoylated.</text>
</comment>
<comment type="PTM">
    <text evidence="8 15 19">Phosphorylated in mitotic cells (PubMed:11408587). ER stress-induced phosphorylation at Ser-441 induces monomerization and subsequent relocalization from Golgi to ER which is essential for mediating unconventional (ER/Golgi-independent) trafficking of CFTR to the cell membrane (PubMed:21884936, PubMed:27062250).</text>
</comment>
<comment type="similarity">
    <text evidence="23">Belongs to the GORASP family.</text>
</comment>
<dbReference type="EMBL" id="AK027349">
    <property type="protein sequence ID" value="BAB55054.1"/>
    <property type="molecule type" value="mRNA"/>
</dbReference>
<dbReference type="EMBL" id="AK023082">
    <property type="protein sequence ID" value="BAB14395.1"/>
    <property type="molecule type" value="mRNA"/>
</dbReference>
<dbReference type="EMBL" id="AK023201">
    <property type="protein sequence ID" value="BAB14459.1"/>
    <property type="molecule type" value="mRNA"/>
</dbReference>
<dbReference type="EMBL" id="AK296698">
    <property type="protein sequence ID" value="BAG59292.1"/>
    <property type="molecule type" value="mRNA"/>
</dbReference>
<dbReference type="EMBL" id="AL117430">
    <property type="protein sequence ID" value="CAB55919.1"/>
    <property type="molecule type" value="mRNA"/>
</dbReference>
<dbReference type="EMBL" id="AC010092">
    <property type="protein sequence ID" value="AAY15076.1"/>
    <property type="molecule type" value="Genomic_DNA"/>
</dbReference>
<dbReference type="EMBL" id="CH471058">
    <property type="protein sequence ID" value="EAX11227.1"/>
    <property type="molecule type" value="Genomic_DNA"/>
</dbReference>
<dbReference type="EMBL" id="BC007770">
    <property type="protein sequence ID" value="AAH07770.1"/>
    <property type="molecule type" value="mRNA"/>
</dbReference>
<dbReference type="CCDS" id="CCDS33325.1">
    <molecule id="Q9H8Y8-1"/>
</dbReference>
<dbReference type="PIR" id="T17229">
    <property type="entry name" value="T17229"/>
</dbReference>
<dbReference type="RefSeq" id="NP_001188357.1">
    <molecule id="Q9H8Y8-2"/>
    <property type="nucleotide sequence ID" value="NM_001201428.2"/>
</dbReference>
<dbReference type="RefSeq" id="NP_056345.3">
    <molecule id="Q9H8Y8-1"/>
    <property type="nucleotide sequence ID" value="NM_015530.4"/>
</dbReference>
<dbReference type="RefSeq" id="XP_006712471.1">
    <property type="nucleotide sequence ID" value="XM_006712408.2"/>
</dbReference>
<dbReference type="PDB" id="3RLE">
    <property type="method" value="X-ray"/>
    <property type="resolution" value="1.65 A"/>
    <property type="chains" value="A=2-208"/>
</dbReference>
<dbReference type="PDB" id="4EDJ">
    <property type="method" value="X-ray"/>
    <property type="resolution" value="1.90 A"/>
    <property type="chains" value="A/B=1-208"/>
</dbReference>
<dbReference type="PDBsum" id="3RLE"/>
<dbReference type="PDBsum" id="4EDJ"/>
<dbReference type="SMR" id="Q9H8Y8"/>
<dbReference type="BioGRID" id="117479">
    <property type="interactions" value="390"/>
</dbReference>
<dbReference type="ComplexPortal" id="CPX-6092">
    <property type="entry name" value="GRASP55-GM45 Golgi stacking complex"/>
</dbReference>
<dbReference type="FunCoup" id="Q9H8Y8">
    <property type="interactions" value="2826"/>
</dbReference>
<dbReference type="IntAct" id="Q9H8Y8">
    <property type="interactions" value="237"/>
</dbReference>
<dbReference type="MINT" id="Q9H8Y8"/>
<dbReference type="STRING" id="9606.ENSP00000234160"/>
<dbReference type="ChEMBL" id="CHEMBL5483010"/>
<dbReference type="GlyCosmos" id="Q9H8Y8">
    <property type="glycosylation" value="9 sites, 1 glycan"/>
</dbReference>
<dbReference type="GlyGen" id="Q9H8Y8">
    <property type="glycosylation" value="16 sites, 3 N-linked glycans (1 site), 1 O-linked glycan (15 sites)"/>
</dbReference>
<dbReference type="iPTMnet" id="Q9H8Y8"/>
<dbReference type="MetOSite" id="Q9H8Y8"/>
<dbReference type="PhosphoSitePlus" id="Q9H8Y8"/>
<dbReference type="SwissPalm" id="Q9H8Y8"/>
<dbReference type="BioMuta" id="GORASP2"/>
<dbReference type="DMDM" id="51316097"/>
<dbReference type="jPOST" id="Q9H8Y8"/>
<dbReference type="MassIVE" id="Q9H8Y8"/>
<dbReference type="PaxDb" id="9606-ENSP00000234160"/>
<dbReference type="PeptideAtlas" id="Q9H8Y8"/>
<dbReference type="ProteomicsDB" id="4483"/>
<dbReference type="ProteomicsDB" id="81257">
    <molecule id="Q9H8Y8-1"/>
</dbReference>
<dbReference type="ProteomicsDB" id="81258">
    <molecule id="Q9H8Y8-2"/>
</dbReference>
<dbReference type="Pumba" id="Q9H8Y8"/>
<dbReference type="Antibodypedia" id="33839">
    <property type="antibodies" value="305 antibodies from 31 providers"/>
</dbReference>
<dbReference type="DNASU" id="26003"/>
<dbReference type="Ensembl" id="ENST00000234160.5">
    <molecule id="Q9H8Y8-1"/>
    <property type="protein sequence ID" value="ENSP00000234160.4"/>
    <property type="gene ID" value="ENSG00000115806.13"/>
</dbReference>
<dbReference type="GeneID" id="26003"/>
<dbReference type="KEGG" id="hsa:26003"/>
<dbReference type="MANE-Select" id="ENST00000234160.5">
    <property type="protein sequence ID" value="ENSP00000234160.4"/>
    <property type="RefSeq nucleotide sequence ID" value="NM_015530.5"/>
    <property type="RefSeq protein sequence ID" value="NP_056345.3"/>
</dbReference>
<dbReference type="UCSC" id="uc002ugk.4">
    <molecule id="Q9H8Y8-1"/>
    <property type="organism name" value="human"/>
</dbReference>
<dbReference type="AGR" id="HGNC:17500"/>
<dbReference type="CTD" id="26003"/>
<dbReference type="DisGeNET" id="26003"/>
<dbReference type="GeneCards" id="GORASP2"/>
<dbReference type="HGNC" id="HGNC:17500">
    <property type="gene designation" value="GORASP2"/>
</dbReference>
<dbReference type="HPA" id="ENSG00000115806">
    <property type="expression patterns" value="Low tissue specificity"/>
</dbReference>
<dbReference type="MalaCards" id="GORASP2"/>
<dbReference type="MIM" id="608693">
    <property type="type" value="gene"/>
</dbReference>
<dbReference type="neXtProt" id="NX_Q9H8Y8"/>
<dbReference type="OpenTargets" id="ENSG00000115806"/>
<dbReference type="PharmGKB" id="PA38457"/>
<dbReference type="VEuPathDB" id="HostDB:ENSG00000115806"/>
<dbReference type="eggNOG" id="KOG3834">
    <property type="taxonomic scope" value="Eukaryota"/>
</dbReference>
<dbReference type="GeneTree" id="ENSGT00390000008686"/>
<dbReference type="HOGENOM" id="CLU_025095_5_0_1"/>
<dbReference type="InParanoid" id="Q9H8Y8"/>
<dbReference type="OMA" id="GLPEVMH"/>
<dbReference type="OrthoDB" id="3318at2759"/>
<dbReference type="PAN-GO" id="Q9H8Y8">
    <property type="GO annotations" value="2 GO annotations based on evolutionary models"/>
</dbReference>
<dbReference type="PhylomeDB" id="Q9H8Y8"/>
<dbReference type="TreeFam" id="TF314053"/>
<dbReference type="PathwayCommons" id="Q9H8Y8"/>
<dbReference type="Reactome" id="R-HSA-162658">
    <property type="pathway name" value="Golgi Cisternae Pericentriolar Stack Reorganization"/>
</dbReference>
<dbReference type="SignaLink" id="Q9H8Y8"/>
<dbReference type="SIGNOR" id="Q9H8Y8"/>
<dbReference type="BioGRID-ORCS" id="26003">
    <property type="hits" value="13 hits in 1168 CRISPR screens"/>
</dbReference>
<dbReference type="ChiTaRS" id="GORASP2">
    <property type="organism name" value="human"/>
</dbReference>
<dbReference type="EvolutionaryTrace" id="Q9H8Y8"/>
<dbReference type="GeneWiki" id="GORASP2"/>
<dbReference type="GenomeRNAi" id="26003"/>
<dbReference type="Pharos" id="Q9H8Y8">
    <property type="development level" value="Tbio"/>
</dbReference>
<dbReference type="PRO" id="PR:Q9H8Y8"/>
<dbReference type="Proteomes" id="UP000005640">
    <property type="component" value="Chromosome 2"/>
</dbReference>
<dbReference type="RNAct" id="Q9H8Y8">
    <property type="molecule type" value="protein"/>
</dbReference>
<dbReference type="Bgee" id="ENSG00000115806">
    <property type="expression patterns" value="Expressed in sperm and 214 other cell types or tissues"/>
</dbReference>
<dbReference type="ExpressionAtlas" id="Q9H8Y8">
    <property type="expression patterns" value="baseline and differential"/>
</dbReference>
<dbReference type="GO" id="GO:0005801">
    <property type="term" value="C:cis-Golgi network"/>
    <property type="evidence" value="ECO:0000303"/>
    <property type="project" value="ComplexPortal"/>
</dbReference>
<dbReference type="GO" id="GO:0005789">
    <property type="term" value="C:endoplasmic reticulum membrane"/>
    <property type="evidence" value="ECO:0000314"/>
    <property type="project" value="UniProtKB"/>
</dbReference>
<dbReference type="GO" id="GO:0005794">
    <property type="term" value="C:Golgi apparatus"/>
    <property type="evidence" value="ECO:0000314"/>
    <property type="project" value="HPA"/>
</dbReference>
<dbReference type="GO" id="GO:0000139">
    <property type="term" value="C:Golgi membrane"/>
    <property type="evidence" value="ECO:0000314"/>
    <property type="project" value="UniProtKB"/>
</dbReference>
<dbReference type="GO" id="GO:0016020">
    <property type="term" value="C:membrane"/>
    <property type="evidence" value="ECO:0000304"/>
    <property type="project" value="UniProtKB"/>
</dbReference>
<dbReference type="GO" id="GO:0030154">
    <property type="term" value="P:cell differentiation"/>
    <property type="evidence" value="ECO:0007669"/>
    <property type="project" value="UniProtKB-KW"/>
</dbReference>
<dbReference type="GO" id="GO:0061951">
    <property type="term" value="P:establishment of protein localization to plasma membrane"/>
    <property type="evidence" value="ECO:0000314"/>
    <property type="project" value="UniProtKB"/>
</dbReference>
<dbReference type="GO" id="GO:0007030">
    <property type="term" value="P:Golgi organization"/>
    <property type="evidence" value="ECO:0000318"/>
    <property type="project" value="GO_Central"/>
</dbReference>
<dbReference type="GO" id="GO:0070925">
    <property type="term" value="P:organelle assembly"/>
    <property type="evidence" value="ECO:0000315"/>
    <property type="project" value="UniProtKB"/>
</dbReference>
<dbReference type="GO" id="GO:0006996">
    <property type="term" value="P:organelle organization"/>
    <property type="evidence" value="ECO:0000315"/>
    <property type="project" value="UniProtKB"/>
</dbReference>
<dbReference type="GO" id="GO:0034976">
    <property type="term" value="P:response to endoplasmic reticulum stress"/>
    <property type="evidence" value="ECO:0000314"/>
    <property type="project" value="UniProtKB"/>
</dbReference>
<dbReference type="GO" id="GO:0006986">
    <property type="term" value="P:response to unfolded protein"/>
    <property type="evidence" value="ECO:0007669"/>
    <property type="project" value="Ensembl"/>
</dbReference>
<dbReference type="GO" id="GO:0007283">
    <property type="term" value="P:spermatogenesis"/>
    <property type="evidence" value="ECO:0007669"/>
    <property type="project" value="UniProtKB-KW"/>
</dbReference>
<dbReference type="DisProt" id="DP02592"/>
<dbReference type="FunFam" id="2.30.42.10:FF:000026">
    <property type="entry name" value="Golgi reassembly stacking protein 2"/>
    <property type="match status" value="1"/>
</dbReference>
<dbReference type="FunFam" id="2.30.42.10:FF:000056">
    <property type="entry name" value="Golgi reassembly-stacking protein 2 isoform 1"/>
    <property type="match status" value="1"/>
</dbReference>
<dbReference type="Gene3D" id="2.30.42.10">
    <property type="match status" value="2"/>
</dbReference>
<dbReference type="InterPro" id="IPR007583">
    <property type="entry name" value="GRASP55_65"/>
</dbReference>
<dbReference type="InterPro" id="IPR024958">
    <property type="entry name" value="GRASP_PDZ"/>
</dbReference>
<dbReference type="InterPro" id="IPR036034">
    <property type="entry name" value="PDZ_sf"/>
</dbReference>
<dbReference type="PANTHER" id="PTHR12893">
    <property type="entry name" value="GOLGI REASSEMBLY STACKING PROTEIN GRASP"/>
    <property type="match status" value="1"/>
</dbReference>
<dbReference type="PANTHER" id="PTHR12893:SF1">
    <property type="entry name" value="GOLGI REASSEMBLY-STACKING PROTEIN 2"/>
    <property type="match status" value="1"/>
</dbReference>
<dbReference type="Pfam" id="PF04495">
    <property type="entry name" value="GRASP55_65"/>
    <property type="match status" value="1"/>
</dbReference>
<dbReference type="SUPFAM" id="SSF50156">
    <property type="entry name" value="PDZ domain-like"/>
    <property type="match status" value="2"/>
</dbReference>
<dbReference type="PROSITE" id="PS51865">
    <property type="entry name" value="PDZ_GRASP"/>
    <property type="match status" value="2"/>
</dbReference>
<feature type="initiator methionine" description="Removed" evidence="17 18">
    <location>
        <position position="1"/>
    </location>
</feature>
<feature type="chain" id="PRO_0000087545" description="Golgi reassembly-stacking protein 2">
    <location>
        <begin position="2"/>
        <end position="452"/>
    </location>
</feature>
<feature type="domain" description="PDZ GRASP-type 1" evidence="3">
    <location>
        <begin position="15"/>
        <end position="105"/>
    </location>
</feature>
<feature type="domain" description="PDZ GRASP-type 2" evidence="3">
    <location>
        <begin position="111"/>
        <end position="199"/>
    </location>
</feature>
<feature type="region of interest" description="GRASP" evidence="4">
    <location>
        <begin position="15"/>
        <end position="215"/>
    </location>
</feature>
<feature type="region of interest" description="Important for membrane binding">
    <location>
        <begin position="194"/>
        <end position="199"/>
    </location>
</feature>
<feature type="region of interest" description="Disordered" evidence="5">
    <location>
        <begin position="372"/>
        <end position="452"/>
    </location>
</feature>
<feature type="compositionally biased region" description="Low complexity" evidence="5">
    <location>
        <begin position="372"/>
        <end position="424"/>
    </location>
</feature>
<feature type="modified residue" description="Dimethylated arginine" evidence="2">
    <location>
        <position position="30"/>
    </location>
</feature>
<feature type="modified residue" description="Dimethylated arginine" evidence="2">
    <location>
        <position position="47"/>
    </location>
</feature>
<feature type="modified residue" description="Phosphoserine" evidence="30 32">
    <location>
        <position position="214"/>
    </location>
</feature>
<feature type="modified residue" description="Phosphothreonine" evidence="27 30 31 32">
    <location>
        <position position="222"/>
    </location>
</feature>
<feature type="modified residue" description="Phosphothreonine" evidence="8 27 30 31 32">
    <location>
        <position position="225"/>
    </location>
</feature>
<feature type="modified residue" description="Phosphoserine" evidence="1">
    <location>
        <position position="409"/>
    </location>
</feature>
<feature type="modified residue" description="Phosphothreonine" evidence="26 27 28 30">
    <location>
        <position position="415"/>
    </location>
</feature>
<feature type="modified residue" description="Phosphothreonine" evidence="28">
    <location>
        <position position="433"/>
    </location>
</feature>
<feature type="modified residue" description="Phosphoserine" evidence="28">
    <location>
        <position position="436"/>
    </location>
</feature>
<feature type="modified residue" description="Phosphoserine" evidence="15 19">
    <location>
        <position position="441"/>
    </location>
</feature>
<feature type="modified residue" description="Phosphoserine" evidence="19 28">
    <location>
        <position position="449"/>
    </location>
</feature>
<feature type="modified residue" description="Phosphoserine" evidence="19 28 29 31">
    <location>
        <position position="451"/>
    </location>
</feature>
<feature type="lipid moiety-binding region" description="N-myristoyl glycine" evidence="17 18 19 24">
    <location>
        <position position="2"/>
    </location>
</feature>
<feature type="splice variant" id="VSP_011300" description="In isoform 2." evidence="22">
    <location>
        <begin position="1"/>
        <end position="68"/>
    </location>
</feature>
<feature type="splice variant" id="VSP_054364" description="In isoform 3." evidence="21">
    <original>MGSSQSVEIPGGGTEGYHVLR</original>
    <variation>MREGSSTLSEIRKLKPGIMVCTCNPSYSNQETE</variation>
    <location>
        <begin position="1"/>
        <end position="21"/>
    </location>
</feature>
<feature type="sequence variant" id="VAR_051013" description="In dbSNP:rs3770436." evidence="11">
    <original>S</original>
    <variation>F</variation>
    <location>
        <position position="432"/>
    </location>
</feature>
<feature type="mutagenesis site" description="Abolishes myristoylation. Loss of its ability to mediate unconventional (ER/Golgi-independent) trafficking of CFTR to the cell membrane. No effect on ER stress-induced relocalization from Golgi to ER." evidence="15 19">
    <original>G</original>
    <variation>A</variation>
    <location>
        <position position="2"/>
    </location>
</feature>
<feature type="mutagenesis site" description="Abolishes organelle clustering; when associated with S-100." evidence="14">
    <original>L</original>
    <variation>A</variation>
    <location>
        <position position="59"/>
    </location>
</feature>
<feature type="mutagenesis site" description="Abolishes organelle clustering; when associated with A-59." evidence="14">
    <original>I</original>
    <variation>S</variation>
    <location>
        <position position="100"/>
    </location>
</feature>
<feature type="mutagenesis site" description="Enhances homodimerization. Loss of ER stress-induced relocalization from Golgi to ER." evidence="19">
    <original>D</original>
    <variation>N</variation>
    <location>
        <position position="148"/>
    </location>
</feature>
<feature type="mutagenesis site" description="Phosphomimetic mutation that decreases the ability to promote organelle clustering." evidence="16">
    <original>S</original>
    <variation>D</variation>
    <location>
        <position position="189"/>
    </location>
</feature>
<feature type="mutagenesis site" description="Abolishes mitotic phosphorylation; when associated with A-225." evidence="8">
    <original>T</original>
    <variation>A</variation>
    <location>
        <position position="222"/>
    </location>
</feature>
<feature type="mutagenesis site" description="Abolishes mitotic phosphorylation; when associated with A-222." evidence="8">
    <original>T</original>
    <variation>A</variation>
    <location>
        <position position="225"/>
    </location>
</feature>
<feature type="mutagenesis site" description="Loss of phosphorylation and its ability to mediate unconventional (ER/Golgi-independent) trafficking of CFTR to the cell membrane. Inhibits ER stress-mediated disruption of homodimerization. Loss of ER stress-induced relocalization from Golgi to ER." evidence="15 19">
    <original>S</original>
    <variation>A</variation>
    <location>
        <position position="441"/>
    </location>
</feature>
<feature type="mutagenesis site" description="Phosphomimetic mutant. No loss of its ability to mediate unconventional (ER/Golgi-independent) trafficking of CFTR to the cell membrane. Disrupts homodimerization. No loss of ER stress-induced relocalization from Golgi to ER." evidence="15 19">
    <original>S</original>
    <variation>D</variation>
    <location>
        <position position="441"/>
    </location>
</feature>
<feature type="mutagenesis site" description="Loss of phosphorylation. Does not inhibit ER stress-mediated disruption of homodimerization." evidence="19">
    <original>S</original>
    <variation>A</variation>
    <location>
        <position position="449"/>
    </location>
</feature>
<feature type="mutagenesis site" description="Phosphomimetic mutant. No disruption of homodimerization." evidence="19">
    <original>S</original>
    <variation>D</variation>
    <location>
        <position position="449"/>
    </location>
</feature>
<feature type="mutagenesis site" description="Loss of phosphorylation. Does not inhibit ER stress-mediated disruption of homodimerization." evidence="19">
    <original>S</original>
    <variation>A</variation>
    <location>
        <position position="451"/>
    </location>
</feature>
<feature type="mutagenesis site" description="Phosphomimetic mutant. Partial disruption of homodimerization." evidence="19">
    <original>S</original>
    <variation>D</variation>
    <location>
        <position position="451"/>
    </location>
</feature>
<feature type="sequence conflict" description="In Ref. 3; BAB14459." evidence="23" ref="3">
    <original>L</original>
    <variation>Q</variation>
    <location>
        <position position="20"/>
    </location>
</feature>
<feature type="sequence conflict" description="In Ref. 3; BAB14395." evidence="23" ref="3">
    <original>E</original>
    <variation>G</variation>
    <location>
        <position position="34"/>
    </location>
</feature>
<feature type="sequence conflict" description="In Ref. 1; AA sequence." evidence="23" ref="1">
    <original>S</original>
    <variation>P</variation>
    <location>
        <position position="83"/>
    </location>
</feature>
<feature type="sequence conflict" description="In Ref. 3; BAB14395." evidence="23" ref="3">
    <original>A</original>
    <variation>T</variation>
    <location>
        <position position="299"/>
    </location>
</feature>
<feature type="strand" evidence="33">
    <location>
        <begin position="12"/>
        <end position="22"/>
    </location>
</feature>
<feature type="helix" evidence="33">
    <location>
        <begin position="27"/>
        <end position="30"/>
    </location>
</feature>
<feature type="turn" evidence="33">
    <location>
        <begin position="35"/>
        <end position="37"/>
    </location>
</feature>
<feature type="strand" evidence="33">
    <location>
        <begin position="38"/>
        <end position="43"/>
    </location>
</feature>
<feature type="strand" evidence="33">
    <location>
        <begin position="50"/>
        <end position="53"/>
    </location>
</feature>
<feature type="helix" evidence="33">
    <location>
        <begin position="54"/>
        <end position="61"/>
    </location>
</feature>
<feature type="turn" evidence="33">
    <location>
        <begin position="62"/>
        <end position="64"/>
    </location>
</feature>
<feature type="strand" evidence="33">
    <location>
        <begin position="67"/>
        <end position="73"/>
    </location>
</feature>
<feature type="turn" evidence="33">
    <location>
        <begin position="74"/>
        <end position="76"/>
    </location>
</feature>
<feature type="strand" evidence="33">
    <location>
        <begin position="79"/>
        <end position="84"/>
    </location>
</feature>
<feature type="strand" evidence="33">
    <location>
        <begin position="88"/>
        <end position="96"/>
    </location>
</feature>
<feature type="strand" evidence="33">
    <location>
        <begin position="98"/>
        <end position="104"/>
    </location>
</feature>
<feature type="helix" evidence="33">
    <location>
        <begin position="108"/>
        <end position="110"/>
    </location>
</feature>
<feature type="strand" evidence="33">
    <location>
        <begin position="113"/>
        <end position="118"/>
    </location>
</feature>
<feature type="helix" evidence="33">
    <location>
        <begin position="123"/>
        <end position="127"/>
    </location>
</feature>
<feature type="turn" evidence="33">
    <location>
        <begin position="131"/>
        <end position="133"/>
    </location>
</feature>
<feature type="strand" evidence="33">
    <location>
        <begin position="134"/>
        <end position="141"/>
    </location>
</feature>
<feature type="strand" evidence="33">
    <location>
        <begin position="145"/>
        <end position="147"/>
    </location>
</feature>
<feature type="helix" evidence="33">
    <location>
        <begin position="149"/>
        <end position="155"/>
    </location>
</feature>
<feature type="turn" evidence="33">
    <location>
        <begin position="156"/>
        <end position="158"/>
    </location>
</feature>
<feature type="strand" evidence="33">
    <location>
        <begin position="161"/>
        <end position="167"/>
    </location>
</feature>
<feature type="turn" evidence="33">
    <location>
        <begin position="168"/>
        <end position="171"/>
    </location>
</feature>
<feature type="strand" evidence="33">
    <location>
        <begin position="172"/>
        <end position="178"/>
    </location>
</feature>
<feature type="strand" evidence="33">
    <location>
        <begin position="184"/>
        <end position="190"/>
    </location>
</feature>
<feature type="strand" evidence="33">
    <location>
        <begin position="192"/>
        <end position="195"/>
    </location>
</feature>
<feature type="helix" evidence="33">
    <location>
        <begin position="198"/>
        <end position="200"/>
    </location>
</feature>
<accession>Q9H8Y8</accession>
<accession>B4DKT0</accession>
<accession>Q53TE3</accession>
<accession>Q96I74</accession>
<accession>Q96K84</accession>
<accession>Q9H946</accession>
<accession>Q9UFW4</accession>